<protein>
    <recommendedName>
        <fullName>Ephrin type-A receptor 2</fullName>
        <ecNumber>2.7.10.1</ecNumber>
    </recommendedName>
    <alternativeName>
        <fullName>Epithelial cell kinase</fullName>
    </alternativeName>
    <alternativeName>
        <fullName>Tyrosine-protein kinase receptor ECK</fullName>
    </alternativeName>
</protein>
<reference key="1">
    <citation type="journal article" date="1990" name="Mol. Cell. Biol.">
        <title>cDNA cloning and characterization of eck, an epithelial cell receptor protein-tyrosine kinase in the eph/elk family of protein kinases.</title>
        <authorList>
            <person name="Lindberg R.A."/>
            <person name="Hunter T."/>
        </authorList>
    </citation>
    <scope>NUCLEOTIDE SEQUENCE [MRNA] (ISOFORM 1)</scope>
    <scope>CATALYTIC ACTIVITY</scope>
    <scope>AUTOPHOSPHORYLATION</scope>
    <source>
        <tissue>Epithelium</tissue>
    </source>
</reference>
<reference key="2">
    <citation type="journal article" date="2008" name="Arthritis Res. Ther.">
        <title>Novel splice variants derived from the receptor tyrosine kinase superfamily are potential therapeutics for rheumatoid arthritis.</title>
        <authorList>
            <person name="Jin P."/>
            <person name="Zhang J."/>
            <person name="Sumariwalla P.F."/>
            <person name="Ni I."/>
            <person name="Jorgensen B."/>
            <person name="Crawford D."/>
            <person name="Phillips S."/>
            <person name="Feldmann M."/>
            <person name="Shepard H.M."/>
            <person name="Paleolog E.M."/>
        </authorList>
    </citation>
    <scope>NUCLEOTIDE SEQUENCE [MRNA] (ISOFORM 2)</scope>
    <scope>ALTERNATIVE SPLICING</scope>
</reference>
<reference key="3">
    <citation type="journal article" date="2006" name="Nature">
        <title>The DNA sequence and biological annotation of human chromosome 1.</title>
        <authorList>
            <person name="Gregory S.G."/>
            <person name="Barlow K.F."/>
            <person name="McLay K.E."/>
            <person name="Kaul R."/>
            <person name="Swarbreck D."/>
            <person name="Dunham A."/>
            <person name="Scott C.E."/>
            <person name="Howe K.L."/>
            <person name="Woodfine K."/>
            <person name="Spencer C.C.A."/>
            <person name="Jones M.C."/>
            <person name="Gillson C."/>
            <person name="Searle S."/>
            <person name="Zhou Y."/>
            <person name="Kokocinski F."/>
            <person name="McDonald L."/>
            <person name="Evans R."/>
            <person name="Phillips K."/>
            <person name="Atkinson A."/>
            <person name="Cooper R."/>
            <person name="Jones C."/>
            <person name="Hall R.E."/>
            <person name="Andrews T.D."/>
            <person name="Lloyd C."/>
            <person name="Ainscough R."/>
            <person name="Almeida J.P."/>
            <person name="Ambrose K.D."/>
            <person name="Anderson F."/>
            <person name="Andrew R.W."/>
            <person name="Ashwell R.I.S."/>
            <person name="Aubin K."/>
            <person name="Babbage A.K."/>
            <person name="Bagguley C.L."/>
            <person name="Bailey J."/>
            <person name="Beasley H."/>
            <person name="Bethel G."/>
            <person name="Bird C.P."/>
            <person name="Bray-Allen S."/>
            <person name="Brown J.Y."/>
            <person name="Brown A.J."/>
            <person name="Buckley D."/>
            <person name="Burton J."/>
            <person name="Bye J."/>
            <person name="Carder C."/>
            <person name="Chapman J.C."/>
            <person name="Clark S.Y."/>
            <person name="Clarke G."/>
            <person name="Clee C."/>
            <person name="Cobley V."/>
            <person name="Collier R.E."/>
            <person name="Corby N."/>
            <person name="Coville G.J."/>
            <person name="Davies J."/>
            <person name="Deadman R."/>
            <person name="Dunn M."/>
            <person name="Earthrowl M."/>
            <person name="Ellington A.G."/>
            <person name="Errington H."/>
            <person name="Frankish A."/>
            <person name="Frankland J."/>
            <person name="French L."/>
            <person name="Garner P."/>
            <person name="Garnett J."/>
            <person name="Gay L."/>
            <person name="Ghori M.R.J."/>
            <person name="Gibson R."/>
            <person name="Gilby L.M."/>
            <person name="Gillett W."/>
            <person name="Glithero R.J."/>
            <person name="Grafham D.V."/>
            <person name="Griffiths C."/>
            <person name="Griffiths-Jones S."/>
            <person name="Grocock R."/>
            <person name="Hammond S."/>
            <person name="Harrison E.S.I."/>
            <person name="Hart E."/>
            <person name="Haugen E."/>
            <person name="Heath P.D."/>
            <person name="Holmes S."/>
            <person name="Holt K."/>
            <person name="Howden P.J."/>
            <person name="Hunt A.R."/>
            <person name="Hunt S.E."/>
            <person name="Hunter G."/>
            <person name="Isherwood J."/>
            <person name="James R."/>
            <person name="Johnson C."/>
            <person name="Johnson D."/>
            <person name="Joy A."/>
            <person name="Kay M."/>
            <person name="Kershaw J.K."/>
            <person name="Kibukawa M."/>
            <person name="Kimberley A.M."/>
            <person name="King A."/>
            <person name="Knights A.J."/>
            <person name="Lad H."/>
            <person name="Laird G."/>
            <person name="Lawlor S."/>
            <person name="Leongamornlert D.A."/>
            <person name="Lloyd D.M."/>
            <person name="Loveland J."/>
            <person name="Lovell J."/>
            <person name="Lush M.J."/>
            <person name="Lyne R."/>
            <person name="Martin S."/>
            <person name="Mashreghi-Mohammadi M."/>
            <person name="Matthews L."/>
            <person name="Matthews N.S.W."/>
            <person name="McLaren S."/>
            <person name="Milne S."/>
            <person name="Mistry S."/>
            <person name="Moore M.J.F."/>
            <person name="Nickerson T."/>
            <person name="O'Dell C.N."/>
            <person name="Oliver K."/>
            <person name="Palmeiri A."/>
            <person name="Palmer S.A."/>
            <person name="Parker A."/>
            <person name="Patel D."/>
            <person name="Pearce A.V."/>
            <person name="Peck A.I."/>
            <person name="Pelan S."/>
            <person name="Phelps K."/>
            <person name="Phillimore B.J."/>
            <person name="Plumb R."/>
            <person name="Rajan J."/>
            <person name="Raymond C."/>
            <person name="Rouse G."/>
            <person name="Saenphimmachak C."/>
            <person name="Sehra H.K."/>
            <person name="Sheridan E."/>
            <person name="Shownkeen R."/>
            <person name="Sims S."/>
            <person name="Skuce C.D."/>
            <person name="Smith M."/>
            <person name="Steward C."/>
            <person name="Subramanian S."/>
            <person name="Sycamore N."/>
            <person name="Tracey A."/>
            <person name="Tromans A."/>
            <person name="Van Helmond Z."/>
            <person name="Wall M."/>
            <person name="Wallis J.M."/>
            <person name="White S."/>
            <person name="Whitehead S.L."/>
            <person name="Wilkinson J.E."/>
            <person name="Willey D.L."/>
            <person name="Williams H."/>
            <person name="Wilming L."/>
            <person name="Wray P.W."/>
            <person name="Wu Z."/>
            <person name="Coulson A."/>
            <person name="Vaudin M."/>
            <person name="Sulston J.E."/>
            <person name="Durbin R.M."/>
            <person name="Hubbard T."/>
            <person name="Wooster R."/>
            <person name="Dunham I."/>
            <person name="Carter N.P."/>
            <person name="McVean G."/>
            <person name="Ross M.T."/>
            <person name="Harrow J."/>
            <person name="Olson M.V."/>
            <person name="Beck S."/>
            <person name="Rogers J."/>
            <person name="Bentley D.R."/>
        </authorList>
    </citation>
    <scope>NUCLEOTIDE SEQUENCE [LARGE SCALE GENOMIC DNA]</scope>
</reference>
<reference key="4">
    <citation type="submission" date="2005-07" db="EMBL/GenBank/DDBJ databases">
        <authorList>
            <person name="Mural R.J."/>
            <person name="Istrail S."/>
            <person name="Sutton G.G."/>
            <person name="Florea L."/>
            <person name="Halpern A.L."/>
            <person name="Mobarry C.M."/>
            <person name="Lippert R."/>
            <person name="Walenz B."/>
            <person name="Shatkay H."/>
            <person name="Dew I."/>
            <person name="Miller J.R."/>
            <person name="Flanigan M.J."/>
            <person name="Edwards N.J."/>
            <person name="Bolanos R."/>
            <person name="Fasulo D."/>
            <person name="Halldorsson B.V."/>
            <person name="Hannenhalli S."/>
            <person name="Turner R."/>
            <person name="Yooseph S."/>
            <person name="Lu F."/>
            <person name="Nusskern D.R."/>
            <person name="Shue B.C."/>
            <person name="Zheng X.H."/>
            <person name="Zhong F."/>
            <person name="Delcher A.L."/>
            <person name="Huson D.H."/>
            <person name="Kravitz S.A."/>
            <person name="Mouchard L."/>
            <person name="Reinert K."/>
            <person name="Remington K.A."/>
            <person name="Clark A.G."/>
            <person name="Waterman M.S."/>
            <person name="Eichler E.E."/>
            <person name="Adams M.D."/>
            <person name="Hunkapiller M.W."/>
            <person name="Myers E.W."/>
            <person name="Venter J.C."/>
        </authorList>
    </citation>
    <scope>NUCLEOTIDE SEQUENCE [LARGE SCALE GENOMIC DNA]</scope>
</reference>
<reference key="5">
    <citation type="journal article" date="2004" name="Genome Res.">
        <title>The status, quality, and expansion of the NIH full-length cDNA project: the Mammalian Gene Collection (MGC).</title>
        <authorList>
            <consortium name="The MGC Project Team"/>
        </authorList>
    </citation>
    <scope>NUCLEOTIDE SEQUENCE [LARGE SCALE MRNA] (ISOFORM 1)</scope>
    <source>
        <tissue>Pancreas</tissue>
    </source>
</reference>
<reference key="6">
    <citation type="journal article" date="1997" name="Cell">
        <title>Unified nomenclature for Eph family receptors and their ligands, the ephrins.</title>
        <authorList>
            <consortium name="Eph nomenclature committee"/>
        </authorList>
    </citation>
    <scope>NOMENCLATURE</scope>
</reference>
<reference key="7">
    <citation type="journal article" date="2000" name="Nat. Cell Biol.">
        <title>Activation of EphA2 kinase suppresses integrin function and causes focal-adhesion-kinase dephosphorylation.</title>
        <authorList>
            <person name="Miao H."/>
            <person name="Burnett E."/>
            <person name="Kinch M."/>
            <person name="Simon E."/>
            <person name="Wang B."/>
        </authorList>
    </citation>
    <scope>FUNCTION IN INTEGRIN-MEDIATED CELL ADHESION</scope>
    <scope>FUNCTION IN CELL MIGRATION</scope>
    <scope>PHOSPHORYLATION</scope>
    <scope>INTERACTION WITH PTK2/FAK1 AND PTPN11</scope>
    <scope>SUBCELLULAR LOCATION</scope>
</reference>
<reference key="8">
    <citation type="journal article" date="2001" name="Cancer Res.">
        <title>EphA2 overexpression causes tumorigenesis of mammary epithelial cells.</title>
        <authorList>
            <person name="Zelinski D.P."/>
            <person name="Zantek N.D."/>
            <person name="Stewart J.C."/>
            <person name="Irizarry A.R."/>
            <person name="Kinch M.S."/>
        </authorList>
    </citation>
    <scope>ONCOGENICITY</scope>
</reference>
<reference key="9">
    <citation type="journal article" date="2002" name="J. Biol. Chem.">
        <title>Regulation of the EphA2 kinase by the low molecular weight tyrosine phosphatase induces transformation.</title>
        <authorList>
            <person name="Kikawa K.D."/>
            <person name="Vidale D.R."/>
            <person name="Van Etten R.L."/>
            <person name="Kinch M.S."/>
        </authorList>
    </citation>
    <scope>INTERACTION WITH ACP1</scope>
    <scope>DEPHOSPHORYLATION BY ACP1</scope>
</reference>
<reference key="10">
    <citation type="journal article" date="2005" name="J. Biol. Chem.">
        <title>EphA2 phosphorylates the cytoplasmic tail of Claudin-4 and mediates paracellular permeability.</title>
        <authorList>
            <person name="Tanaka M."/>
            <person name="Kamata R."/>
            <person name="Sakai R."/>
        </authorList>
    </citation>
    <scope>FUNCTION IN CELL-CELL INTERACTION</scope>
    <scope>INTERACTION WITH CLDN4</scope>
    <scope>MUTAGENESIS OF LYS-646</scope>
</reference>
<reference key="11">
    <citation type="journal article" date="2007" name="Int. J. Oncol.">
        <title>Ephrin-A1 is a negative regulator in glioma through down-regulation of EphA2 and FAK.</title>
        <authorList>
            <person name="Liu D.-P."/>
            <person name="Wang Y."/>
            <person name="Koeffler H.P."/>
            <person name="Xie D."/>
        </authorList>
    </citation>
    <scope>TISSUE SPECIFICITY</scope>
</reference>
<reference key="12">
    <citation type="journal article" date="2007" name="J. Biol. Chem.">
        <title>Regulation of EphA2 receptor endocytosis by SHIP2 lipid phosphatase via phosphatidylinositol 3-Kinase-dependent Rac1 activation.</title>
        <authorList>
            <person name="Zhuang G."/>
            <person name="Hunter S."/>
            <person name="Hwang Y."/>
            <person name="Chen J."/>
        </authorList>
    </citation>
    <scope>INTERACTION WITH INPPL1</scope>
</reference>
<reference key="13">
    <citation type="journal article" date="2008" name="Cancer Res.">
        <title>EphA2 is an essential mediator of UV radiation-induced apoptosis.</title>
        <authorList>
            <person name="Zhang G."/>
            <person name="Njauw C.-N."/>
            <person name="Park J.M."/>
            <person name="Naruse C."/>
            <person name="Asano M."/>
            <person name="Tsao H."/>
        </authorList>
    </citation>
    <scope>FUNCTION IN APOPTOSIS</scope>
    <scope>INDUCTION BY UV</scope>
</reference>
<reference key="14">
    <citation type="journal article" date="2008" name="Mol. Cell">
        <title>Kinase-selective enrichment enables quantitative phosphoproteomics of the kinome across the cell cycle.</title>
        <authorList>
            <person name="Daub H."/>
            <person name="Olsen J.V."/>
            <person name="Bairlein M."/>
            <person name="Gnad F."/>
            <person name="Oppermann F.S."/>
            <person name="Korner R."/>
            <person name="Greff Z."/>
            <person name="Keri G."/>
            <person name="Stemmann O."/>
            <person name="Mann M."/>
        </authorList>
    </citation>
    <scope>PHOSPHORYLATION [LARGE SCALE ANALYSIS] AT SER-570; SER-579 AND THR-647</scope>
    <scope>IDENTIFICATION BY MASS SPECTROMETRY [LARGE SCALE ANALYSIS]</scope>
    <source>
        <tissue>Cervix carcinoma</tissue>
    </source>
</reference>
<reference key="15">
    <citation type="journal article" date="2008" name="Oncogene">
        <title>Soluble monomeric EphrinA1 is released from tumor cells and is a functional ligand for the EphA2 receptor.</title>
        <authorList>
            <person name="Wykosky J."/>
            <person name="Palma E."/>
            <person name="Gibo D.M."/>
            <person name="Ringler S."/>
            <person name="Turner C.P."/>
            <person name="Debinski W."/>
        </authorList>
    </citation>
    <scope>SUBCELLULAR LOCATION</scope>
    <scope>PHOSPHORYLATION</scope>
</reference>
<reference key="16">
    <citation type="journal article" date="2008" name="Proc. Natl. Acad. Sci. U.S.A.">
        <title>A quantitative atlas of mitotic phosphorylation.</title>
        <authorList>
            <person name="Dephoure N."/>
            <person name="Zhou C."/>
            <person name="Villen J."/>
            <person name="Beausoleil S.A."/>
            <person name="Bakalarski C.E."/>
            <person name="Elledge S.J."/>
            <person name="Gygi S.P."/>
        </authorList>
    </citation>
    <scope>PHOSPHORYLATION [LARGE SCALE ANALYSIS] AT SER-570; SER-892 AND SER-901</scope>
    <scope>IDENTIFICATION BY MASS SPECTROMETRY [LARGE SCALE ANALYSIS]</scope>
    <source>
        <tissue>Cervix carcinoma</tissue>
    </source>
</reference>
<reference key="17">
    <citation type="journal article" date="2009" name="Cancer Cell">
        <title>EphA2 mediates ligand-dependent inhibition and ligand-independent promotion of cell migration and invasion via a reciprocal regulatory loop with Akt.</title>
        <authorList>
            <person name="Miao H."/>
            <person name="Li D.Q."/>
            <person name="Mukherjee A."/>
            <person name="Guo H."/>
            <person name="Petty A."/>
            <person name="Cutter J."/>
            <person name="Basilion J.P."/>
            <person name="Sedor J."/>
            <person name="Wu J."/>
            <person name="Danielpour D."/>
            <person name="Sloan A.E."/>
            <person name="Cohen M.L."/>
            <person name="Wang B."/>
        </authorList>
    </citation>
    <scope>DISEASE</scope>
    <scope>FUNCTION IN CELL MIGRATION</scope>
    <scope>SUBCELLULAR LOCATION</scope>
    <scope>MUTAGENESIS OF ASP-739 AND SER-897</scope>
    <scope>PHOSPHORYLATION AT SER-897 BY PKB</scope>
</reference>
<reference key="18">
    <citation type="journal article" date="2009" name="J. Proteome Res.">
        <title>Glycoproteomics analysis of human liver tissue by combination of multiple enzyme digestion and hydrazide chemistry.</title>
        <authorList>
            <person name="Chen R."/>
            <person name="Jiang X."/>
            <person name="Sun D."/>
            <person name="Han G."/>
            <person name="Wang F."/>
            <person name="Ye M."/>
            <person name="Wang L."/>
            <person name="Zou H."/>
        </authorList>
    </citation>
    <scope>GLYCOSYLATION [LARGE SCALE ANALYSIS] AT ASN-435</scope>
    <source>
        <tissue>Liver</tissue>
    </source>
</reference>
<reference key="19">
    <citation type="journal article" date="2009" name="Mol. Cancer Res.">
        <title>Hsp90 is an essential regulator of EphA2 receptor stability and signaling: implications for cancer cell migration and metastasis.</title>
        <authorList>
            <person name="Annamalai B."/>
            <person name="Liu X."/>
            <person name="Gopal U."/>
            <person name="Isaacs J.S."/>
        </authorList>
    </citation>
    <scope>UBIQUITINATION BY STUB1</scope>
</reference>
<reference key="20">
    <citation type="journal article" date="2009" name="Mol. Cell. Proteomics">
        <title>Large-scale proteomics analysis of the human kinome.</title>
        <authorList>
            <person name="Oppermann F.S."/>
            <person name="Gnad F."/>
            <person name="Olsen J.V."/>
            <person name="Hornberger R."/>
            <person name="Greff Z."/>
            <person name="Keri G."/>
            <person name="Mann M."/>
            <person name="Daub H."/>
        </authorList>
    </citation>
    <scope>PHOSPHORYLATION [LARGE SCALE ANALYSIS] AT SER-570; TYR-628; THR-647 AND SER-869</scope>
    <scope>IDENTIFICATION BY MASS SPECTROMETRY [LARGE SCALE ANALYSIS]</scope>
</reference>
<reference key="21">
    <citation type="journal article" date="2010" name="J. Cell Biol.">
        <title>Ephexin4 and EphA2 mediate cell migration through a RhoG-dependent mechanism.</title>
        <authorList>
            <person name="Hiramoto-Yamaki N."/>
            <person name="Takeuchi S."/>
            <person name="Ueda S."/>
            <person name="Harada K."/>
            <person name="Fujimoto S."/>
            <person name="Negishi M."/>
            <person name="Katoh H."/>
        </authorList>
    </citation>
    <scope>FUNCTION IN CELL MIGRATION</scope>
    <scope>INTERACTION WITH ARHGEF16; DOCK4 AND ELMO2</scope>
</reference>
<reference key="22">
    <citation type="journal article" date="2010" name="Mol. Biol. Cell">
        <title>Ligand targeting of EphA2 enhances keratinocyte adhesion and differentiation via desmoglein 1.</title>
        <authorList>
            <person name="Lin S."/>
            <person name="Gordon K."/>
            <person name="Kaplan N."/>
            <person name="Getsios S."/>
        </authorList>
    </citation>
    <scope>FUNCTION IN KERATINOCYTE ADHESION AND DIFFERENTIATION</scope>
    <scope>SUBCELLULAR LOCATION</scope>
</reference>
<reference key="23">
    <citation type="journal article" date="2010" name="Sci. Signal.">
        <title>Quantitative phosphoproteomics reveals widespread full phosphorylation site occupancy during mitosis.</title>
        <authorList>
            <person name="Olsen J.V."/>
            <person name="Vermeulen M."/>
            <person name="Santamaria A."/>
            <person name="Kumar C."/>
            <person name="Miller M.L."/>
            <person name="Jensen L.J."/>
            <person name="Gnad F."/>
            <person name="Cox J."/>
            <person name="Jensen T.S."/>
            <person name="Nigg E.A."/>
            <person name="Brunak S."/>
            <person name="Mann M."/>
        </authorList>
    </citation>
    <scope>IDENTIFICATION BY MASS SPECTROMETRY [LARGE SCALE ANALYSIS]</scope>
    <source>
        <tissue>Cervix carcinoma</tissue>
    </source>
</reference>
<reference key="24">
    <citation type="journal article" date="2010" name="Science">
        <title>Restriction of receptor movement alters cellular response: physical force sensing by EphA2.</title>
        <authorList>
            <person name="Salaita K."/>
            <person name="Nair P.M."/>
            <person name="Petit R.S."/>
            <person name="Neve R.M."/>
            <person name="Das D."/>
            <person name="Gray J.W."/>
            <person name="Groves J.T."/>
        </authorList>
    </citation>
    <scope>SUBCELLULAR LOCATION</scope>
</reference>
<reference key="25">
    <citation type="journal article" date="2011" name="BMC Syst. Biol.">
        <title>Initial characterization of the human central proteome.</title>
        <authorList>
            <person name="Burkard T.R."/>
            <person name="Planyavsky M."/>
            <person name="Kaupe I."/>
            <person name="Breitwieser F.P."/>
            <person name="Buerckstuemmer T."/>
            <person name="Bennett K.L."/>
            <person name="Superti-Furga G."/>
            <person name="Colinge J."/>
        </authorList>
    </citation>
    <scope>IDENTIFICATION BY MASS SPECTROMETRY [LARGE SCALE ANALYSIS]</scope>
</reference>
<reference key="26">
    <citation type="journal article" date="2011" name="Nat. Med.">
        <title>EGFR and EphA2 are host factors for hepatitis C virus entry and possible targets for antiviral therapy.</title>
        <authorList>
            <person name="Lupberger J."/>
            <person name="Zeisel M.B."/>
            <person name="Xiao F."/>
            <person name="Thumann C."/>
            <person name="Fofana I."/>
            <person name="Zona L."/>
            <person name="Davis C."/>
            <person name="Mee C.J."/>
            <person name="Turek M."/>
            <person name="Gorke S."/>
            <person name="Royer C."/>
            <person name="Fischer B."/>
            <person name="Zahid M.N."/>
            <person name="Lavillette D."/>
            <person name="Fresquet J."/>
            <person name="Cosset F.L."/>
            <person name="Rothenberg S.M."/>
            <person name="Pietschmann T."/>
            <person name="Patel A.H."/>
            <person name="Pessaux P."/>
            <person name="Doffoel M."/>
            <person name="Raffelsberger W."/>
            <person name="Poch O."/>
            <person name="McKeating J.A."/>
            <person name="Brino L."/>
            <person name="Baumert T.F."/>
        </authorList>
    </citation>
    <scope>FUNCTION (MICROBIAL INFECTION)</scope>
</reference>
<reference key="27">
    <citation type="journal article" date="2012" name="Biochemistry">
        <title>Solution structure of the first Sam domain of Odin and binding studies with the EphA2 receptor.</title>
        <authorList>
            <person name="Mercurio F.A."/>
            <person name="Marasco D."/>
            <person name="Pirone L."/>
            <person name="Pedone E.M."/>
            <person name="Pellecchia M."/>
            <person name="Leone M."/>
        </authorList>
    </citation>
    <scope>INTERACTION WITH ANKS1A</scope>
</reference>
<reference key="28">
    <citation type="journal article" date="2012" name="Nat. Med.">
        <title>The ephrin receptor tyrosine kinase A2 is a cellular receptor for Kaposi's sarcoma-associated herpesvirus.</title>
        <authorList>
            <person name="Hahn A.S."/>
            <person name="Kaufmann J.K."/>
            <person name="Wies E."/>
            <person name="Naschberger E."/>
            <person name="Panteleev-Ivlev J."/>
            <person name="Schmidt K."/>
            <person name="Holzer A."/>
            <person name="Schmidt M."/>
            <person name="Chen J."/>
            <person name="Konig S."/>
            <person name="Ensser A."/>
            <person name="Myoung J."/>
            <person name="Brockmeyer N.H."/>
            <person name="Sturzl M."/>
            <person name="Fleckenstein B."/>
            <person name="Neipel F."/>
        </authorList>
    </citation>
    <scope>INTERACTION WITH HHV-8 GLYCOPROTEIN L/GLYCOPROTEIN H (MICROBIAL INFECTION)</scope>
</reference>
<reference key="29">
    <citation type="journal article" date="2013" name="J. Proteome Res.">
        <title>Toward a comprehensive characterization of a human cancer cell phosphoproteome.</title>
        <authorList>
            <person name="Zhou H."/>
            <person name="Di Palma S."/>
            <person name="Preisinger C."/>
            <person name="Peng M."/>
            <person name="Polat A.N."/>
            <person name="Heck A.J."/>
            <person name="Mohammed S."/>
        </authorList>
    </citation>
    <scope>PHOSPHORYLATION [LARGE SCALE ANALYSIS] AT TYR-575; SER-892; SER-897 AND SER-901</scope>
    <scope>IDENTIFICATION BY MASS SPECTROMETRY [LARGE SCALE ANALYSIS]</scope>
    <source>
        <tissue>Cervix carcinoma</tissue>
    </source>
</reference>
<reference key="30">
    <citation type="journal article" date="2013" name="Mol. Cell. Biol.">
        <title>Receptor protein tyrosine phosphatase-receptor tyrosine kinase substrate screen identifies EphA2 as a target for LAR in cell migration.</title>
        <authorList>
            <person name="Lee H."/>
            <person name="Bennett A.M."/>
        </authorList>
    </citation>
    <scope>FUNCTION IN CELL MIGRATION</scope>
    <scope>PHOSPHORYLATION AT TYR-930</scope>
    <scope>DEPHOSPHORYLATION AT TYR-930 BY PTPRF</scope>
    <scope>INTERACTION WITH NCK1</scope>
</reference>
<reference key="31">
    <citation type="journal article" date="2013" name="PLoS ONE">
        <title>Early insights into the function of KIAA1199, a markedly overexpressed protein in human colorectal tumors.</title>
        <authorList>
            <person name="Tiwari A."/>
            <person name="Schneider M."/>
            <person name="Fiorino A."/>
            <person name="Haider R."/>
            <person name="Okoniewski M.J."/>
            <person name="Roschitzki B."/>
            <person name="Uzozie A."/>
            <person name="Menigatti M."/>
            <person name="Jiricny J."/>
            <person name="Marra G."/>
        </authorList>
    </citation>
    <scope>INTERACTION WITH CEMIP</scope>
</reference>
<reference key="32">
    <citation type="journal article" date="2015" name="Nat. Commun.">
        <title>Crucial roles of RSK in cell motility by catalysing serine phosphorylation of EphA2.</title>
        <authorList>
            <person name="Zhou Y."/>
            <person name="Yamada N."/>
            <person name="Tanaka T."/>
            <person name="Hori T."/>
            <person name="Yokoyama S."/>
            <person name="Hayakawa Y."/>
            <person name="Yano S."/>
            <person name="Fukuoka J."/>
            <person name="Koizumi K."/>
            <person name="Saiki I."/>
            <person name="Sakurai H."/>
        </authorList>
    </citation>
    <scope>PHOSPHORYLATION AT SER-897 BY RPS6KA1 AND RPS6KA3</scope>
    <scope>FUNCTION IN CELL MIGRATION</scope>
</reference>
<reference key="33">
    <citation type="journal article" date="2016" name="Mol. Biol. Cell">
        <title>Protein kinase A can block EphA2 receptor-mediated cell repulsion by increasing EphA2 S897 phosphorylation.</title>
        <authorList>
            <person name="Barquilla A."/>
            <person name="Lamberto I."/>
            <person name="Noberini R."/>
            <person name="Heynen-Genel S."/>
            <person name="Brill L.M."/>
            <person name="Pasquale E.B."/>
        </authorList>
    </citation>
    <scope>PHOSPHORYLATION AT SER-897 BY PKA</scope>
    <scope>PHOSPHORYLATION AT SER-901</scope>
    <scope>FUNCTION</scope>
</reference>
<reference key="34">
    <citation type="journal article" date="2018" name="Nat. Microbiol.">
        <title>Ephrin receptor A2 is an epithelial cell receptor for Epstein-Barr virus entry.</title>
        <authorList>
            <person name="Zhang H."/>
            <person name="Li Y."/>
            <person name="Wang H.B."/>
            <person name="Zhang A."/>
            <person name="Chen M.L."/>
            <person name="Fang Z.X."/>
            <person name="Dong X.D."/>
            <person name="Li S.B."/>
            <person name="Du Y."/>
            <person name="Xiong D."/>
            <person name="He J.Y."/>
            <person name="Li M.Z."/>
            <person name="Liu Y.M."/>
            <person name="Zhou A.J."/>
            <person name="Zhong Q."/>
            <person name="Zeng Y.X."/>
            <person name="Kieff E."/>
            <person name="Zhang Z."/>
            <person name="Gewurz B.E."/>
            <person name="Zhao B."/>
            <person name="Zeng M.S."/>
        </authorList>
    </citation>
    <scope>INTERACTION WITH EPSTEIN-BARR VIRUS/HHV-4 GLYCOPROTEIN L/GLYCOPROTEIN H (MICROBIAL INFECTION)</scope>
</reference>
<reference key="35">
    <citation type="journal article" date="2018" name="Nat. Microbiol.">
        <title>Ephrin receptor A2 is a functional entry receptor for Epstein-Barr virus.</title>
        <authorList>
            <person name="Chen J."/>
            <person name="Sathiyamoorthy K."/>
            <person name="Zhang X."/>
            <person name="Schaller S."/>
            <person name="Perez White B.E."/>
            <person name="Jardetzky T.S."/>
            <person name="Longnecker R."/>
        </authorList>
    </citation>
    <scope>INTERACTION WITH EPSTEIN-BARR VIRUS/HHV-4 GLYCOPROTEIN L/GLYCOPROTEIN H (MICROBIAL INFECTION)</scope>
</reference>
<reference key="36">
    <citation type="journal article" date="2021" name="Cells">
        <title>EphA2 Interacts with Tim-4 through Association between Its FN3 Domain and the IgV Domain of Tim-4.</title>
        <authorList>
            <person name="Moon B."/>
            <person name="Yang S."/>
            <person name="Kim K."/>
            <person name="Lee J."/>
            <person name="Jeong D."/>
            <person name="Park D."/>
        </authorList>
    </citation>
    <scope>INTERACTION WITH TIMD4</scope>
    <scope>SUBCELLULAR LOCATION</scope>
</reference>
<reference key="37">
    <citation type="journal article" date="2023" name="PLoS Pathog.">
        <title>EphA2 is a functional entry receptor for HCMV infection of glioblastoma cells.</title>
        <authorList>
            <person name="Dong X.D."/>
            <person name="Li Y."/>
            <person name="Li Y."/>
            <person name="Sun C."/>
            <person name="Liu S.X."/>
            <person name="Duan H."/>
            <person name="Cui R."/>
            <person name="Zhong Q."/>
            <person name="Mou Y.G."/>
            <person name="Wen L."/>
            <person name="Yang B."/>
            <person name="Zeng M.S."/>
            <person name="Luo M.H."/>
            <person name="Zhang H."/>
        </authorList>
    </citation>
    <scope>FUNCTION (MICROBIAL INFECTION)</scope>
    <scope>INTERACTION WITH HUMAN CYTOMEGALOVIRUS PROTEINS GH AND GL (MICROBIAL INFECTION)</scope>
</reference>
<reference key="38">
    <citation type="journal article" date="2002" name="Structure">
        <title>Structures of the cancer-related Aurora-A, FAK, and EphA2 protein kinases from nanovolume crystallography.</title>
        <authorList>
            <person name="Nowakowski J."/>
            <person name="Cronin C.N."/>
            <person name="McRee D.E."/>
            <person name="Knuth M.W."/>
            <person name="Nelson C.G."/>
            <person name="Pavletich N.P."/>
            <person name="Rogers J."/>
            <person name="Sang B.C."/>
            <person name="Scheibe D.N."/>
            <person name="Swanson R.V."/>
            <person name="Thompson D.A."/>
        </authorList>
    </citation>
    <scope>X-RAY CRYSTALLOGRAPHY (2.3 ANGSTROMS) OF 596-900</scope>
</reference>
<reference key="39">
    <citation type="submission" date="2008-01" db="PDB data bank">
        <title>Solution structure of the C-terminal SAM-domain of EPHAA2: ephrin type-A receptor 2 precursor (EC 2.7.10.1).</title>
        <authorList>
            <consortium name="RIKEN structural genomics initiative (RSGI)"/>
        </authorList>
    </citation>
    <scope>STRUCTURE BY NMR OF 902-976</scope>
</reference>
<reference key="40">
    <citation type="journal article" date="2009" name="EMBO Rep.">
        <title>Ligand recognition by A-class Eph receptors: crystal structures of the EphA2 ligand-binding domain and the EphA2/ephrin-A1 complex.</title>
        <authorList>
            <person name="Himanen J.P."/>
            <person name="Goldgur Y."/>
            <person name="Miao H."/>
            <person name="Myshkin E."/>
            <person name="Guo H."/>
            <person name="Buck M."/>
            <person name="Nguyen M."/>
            <person name="Rajashankar K.R."/>
            <person name="Wang B."/>
            <person name="Nikolov D.B."/>
        </authorList>
    </citation>
    <scope>X-RAY CRYSTALLOGRAPHY (2.52 ANGSTROMS) OF 28-201</scope>
    <scope>X-RAY CRYSTALLOGRAPHY (2.0 ANGSTROMS) OF 28-201 IN COMPLEX WITH EFNA1</scope>
    <scope>SUBUNIT</scope>
    <scope>DISULFIDE BOND</scope>
    <scope>MUTAGENESIS OF ARG-103</scope>
</reference>
<reference key="41">
    <citation type="submission" date="2009-02" db="PDB data bank">
        <title>Ephrin A1 bound to the ligand binding domain of the human ephrin A2 (EPHA2) receptor protein kinase.</title>
        <authorList>
            <consortium name="Structural genomics consortium (SGC)"/>
        </authorList>
    </citation>
    <scope>X-RAY CRYSTALLOGRAPHY (1.95 ANGSTROMS) OF 25-202</scope>
    <scope>DISULFIDE BOND</scope>
</reference>
<reference key="42">
    <citation type="submission" date="2009-08" db="PDB data bank">
        <title>Left-handed dimer of EPHA2 transmembrane domain helix packing diversity among receptor tyrosine kinases.</title>
        <authorList>
            <person name="Mayzel M.L."/>
            <person name="Bocharov E.V."/>
            <person name="Volynsky P.E."/>
            <person name="Arseniev A.S."/>
        </authorList>
    </citation>
    <scope>STRUCTURE BY NMR OF 523-563</scope>
</reference>
<reference key="43">
    <citation type="journal article" date="2010" name="Proc. Natl. Acad. Sci. U.S.A.">
        <title>Architecture of Eph receptor clusters.</title>
        <authorList>
            <person name="Himanen J.P."/>
            <person name="Yermekbayeva L."/>
            <person name="Janes P.W."/>
            <person name="Walker J.R."/>
            <person name="Xu K."/>
            <person name="Atapattu L."/>
            <person name="Rajashankar K.R."/>
            <person name="Mensinga A."/>
            <person name="Lackmann M."/>
            <person name="Nikolov D.B."/>
            <person name="Dhe-Paganon S."/>
        </authorList>
    </citation>
    <scope>X-RAY CRYSTALLOGRAPHY (2.65 ANGSTROMS) OF 23-202 IN COMPLEX WITH EFNA1</scope>
    <scope>SUBUNIT</scope>
</reference>
<reference key="44">
    <citation type="journal article" date="2007" name="Nature">
        <title>Patterns of somatic mutation in human cancer genomes.</title>
        <authorList>
            <person name="Greenman C."/>
            <person name="Stephens P."/>
            <person name="Smith R."/>
            <person name="Dalgliesh G.L."/>
            <person name="Hunter C."/>
            <person name="Bignell G."/>
            <person name="Davies H."/>
            <person name="Teague J."/>
            <person name="Butler A."/>
            <person name="Stevens C."/>
            <person name="Edkins S."/>
            <person name="O'Meara S."/>
            <person name="Vastrik I."/>
            <person name="Schmidt E.E."/>
            <person name="Avis T."/>
            <person name="Barthorpe S."/>
            <person name="Bhamra G."/>
            <person name="Buck G."/>
            <person name="Choudhury B."/>
            <person name="Clements J."/>
            <person name="Cole J."/>
            <person name="Dicks E."/>
            <person name="Forbes S."/>
            <person name="Gray K."/>
            <person name="Halliday K."/>
            <person name="Harrison R."/>
            <person name="Hills K."/>
            <person name="Hinton J."/>
            <person name="Jenkinson A."/>
            <person name="Jones D."/>
            <person name="Menzies A."/>
            <person name="Mironenko T."/>
            <person name="Perry J."/>
            <person name="Raine K."/>
            <person name="Richardson D."/>
            <person name="Shepherd R."/>
            <person name="Small A."/>
            <person name="Tofts C."/>
            <person name="Varian J."/>
            <person name="Webb T."/>
            <person name="West S."/>
            <person name="Widaa S."/>
            <person name="Yates A."/>
            <person name="Cahill D.P."/>
            <person name="Louis D.N."/>
            <person name="Goldstraw P."/>
            <person name="Nicholson A.G."/>
            <person name="Brasseur F."/>
            <person name="Looijenga L."/>
            <person name="Weber B.L."/>
            <person name="Chiew Y.-E."/>
            <person name="DeFazio A."/>
            <person name="Greaves M.F."/>
            <person name="Green A.R."/>
            <person name="Campbell P."/>
            <person name="Birney E."/>
            <person name="Easton D.F."/>
            <person name="Chenevix-Trench G."/>
            <person name="Tan M.-H."/>
            <person name="Khoo S.K."/>
            <person name="Teh B.T."/>
            <person name="Yuen S.T."/>
            <person name="Leung S.Y."/>
            <person name="Wooster R."/>
            <person name="Futreal P.A."/>
            <person name="Stratton M.R."/>
        </authorList>
    </citation>
    <scope>VARIANTS [LARGE SCALE ANALYSIS] ARG-391; MET-511; HIS-568; SER-777 AND HIS-876</scope>
</reference>
<reference key="45">
    <citation type="journal article" date="2008" name="Mol. Vis.">
        <title>The EPHA2 gene is associated with cataracts linked to chromosome 1p.</title>
        <authorList>
            <person name="Shiels A."/>
            <person name="Bennett T.M."/>
            <person name="Knopf H.L.S."/>
            <person name="Maraini G."/>
            <person name="Li A."/>
            <person name="Jiao X."/>
            <person name="Hejtmancik J.F."/>
        </authorList>
    </citation>
    <scope>VARIANT CTRCT6 TRP-948</scope>
</reference>
<reference key="46">
    <citation type="journal article" date="2009" name="Hum. Mutat.">
        <title>Mutations of the EPHA2 receptor tyrosine kinase gene cause autosomal dominant congenital cataract.</title>
        <authorList>
            <person name="Zhang T."/>
            <person name="Hua R."/>
            <person name="Xiao W."/>
            <person name="Burdon K.P."/>
            <person name="Bhattacharya S.S."/>
            <person name="Craig J.E."/>
            <person name="Shang D."/>
            <person name="Zhao X."/>
            <person name="Mackey D.A."/>
            <person name="Moore A.T."/>
            <person name="Luo Y."/>
            <person name="Zhang J."/>
            <person name="Zhang X."/>
        </authorList>
    </citation>
    <scope>VARIANT CTRCT6 ILE-940</scope>
</reference>
<reference key="47">
    <citation type="journal article" date="2009" name="PLoS Genet.">
        <title>EPHA2 is associated with age-related cortical cataract in mice and humans.</title>
        <authorList>
            <person name="Jun G."/>
            <person name="Guo H."/>
            <person name="Klein B.E."/>
            <person name="Klein R."/>
            <person name="Wang J.J."/>
            <person name="Mitchell P."/>
            <person name="Miao H."/>
            <person name="Lee K.E."/>
            <person name="Joshi T."/>
            <person name="Buck M."/>
            <person name="Chugha P."/>
            <person name="Bardenstein D."/>
            <person name="Klein A.P."/>
            <person name="Bailey-Wilson J.E."/>
            <person name="Gong X."/>
            <person name="Spector T.D."/>
            <person name="Andrew T."/>
            <person name="Hammond C.J."/>
            <person name="Elston R.C."/>
            <person name="Iyengar S.K."/>
            <person name="Wang B."/>
        </authorList>
    </citation>
    <scope>VARIANT CTRCT6 GLN-721</scope>
    <scope>CHARACTERIZATION OF VARIANT CTRCT6 GLN-721</scope>
</reference>
<reference key="48">
    <citation type="journal article" date="2012" name="PLoS ONE">
        <title>Human cataract mutations in EPHA2 SAM domain alter receptor stability and function.</title>
        <authorList>
            <person name="Park J.E."/>
            <person name="Son A.I."/>
            <person name="Hua R."/>
            <person name="Wang L."/>
            <person name="Zhang X."/>
            <person name="Zhou R."/>
        </authorList>
    </citation>
    <scope>CHARACTERIZATION OF VARIANTS CTRCT6 ILE-940 AND CTRCT6 TRP-948</scope>
</reference>
<sequence length="976" mass="108266">MELQAARACFALLWGCALAAAAAAQGKEVVLLDFAAAGGELGWLTHPYGKGWDLMQNIMNDMPIYMYSVCNVMSGDQDNWLRTNWVYRGEAERIFIELKFTVRDCNSFPGGASSCKETFNLYYAESDLDYGTNFQKRLFTKIDTIAPDEITVSSDFEARHVKLNVEERSVGPLTRKGFYLAFQDIGACVALLSVRVYYKKCPELLQGLAHFPETIAGSDAPSLATVAGTCVDHAVVPPGGEEPRMHCAVDGEWLVPIGQCLCQAGYEKVEDACQACSPGFFKFEASESPCLECPEHTLPSPEGATSCECEEGFFRAPQDPASMPCTRPPSAPHYLTAVGMGAKVELRWTPPQDSGGREDIVYSVTCEQCWPESGECGPCEASVRYSEPPHGLTRTSVTVSDLEPHMNYTFTVEARNGVSGLVTSRSFRTASVSINQTEPPKVRLEGRSTTSLSVSWSIPPPQQSRVWKYEVTYRKKGDSNSYNVRRTEGFSVTLDDLAPDTTYLVQVQALTQEGQGAGSKVHEFQTLSPEGSGNLAVIGGVAVGVVLLLVLAGVGFFIHRRRKNQRARQSPEDVYFSKSEQLKPLKTYVDPHTYEDPNQAVLKFTTEIHPSCVTRQKVIGAGEFGEVYKGMLKTSSGKKEVPVAIKTLKAGYTEKQRVDFLGEAGIMGQFSHHNIIRLEGVISKYKPMMIITEYMENGALDKFLREKDGEFSVLQLVGMLRGIAAGMKYLANMNYVHRDLAARNILVNSNLVCKVSDFGLSRVLEDDPEATYTTSGGKIPIRWTAPEAISYRKFTSASDVWSFGIVMWEVMTYGERPYWELSNHEVMKAINDGFRLPTPMDCPSAIYQLMMQCWQQERARRPKFADIVSILDKLIRAPDSLKTLADFDPRVSIRLPSTSGSEGVPFRTVSEWLESIKMQQYTEHFMAAGYTAIEKVVQMTNDDIKRIGVRLPGHQKRIAYSLLGLKDQVNTVGIPI</sequence>
<comment type="function">
    <text evidence="9 11 15 21 25 26 32 34 35">Receptor tyrosine kinase which binds promiscuously membrane-bound ephrin-A family ligands residing on adjacent cells, leading to contact-dependent bidirectional signaling into neighboring cells. The signaling pathway downstream of the receptor is referred to as forward signaling while the signaling pathway downstream of the ephrin ligand is referred to as reverse signaling. Activated by the ligand ephrin-A1/EFNA1 regulates migration, integrin-mediated adhesion, proliferation and differentiation of cells. Regulates cell adhesion and differentiation through DSG1/desmoglein-1 and inhibition of the ERK1/ERK2 (MAPK3/MAPK1, respectively) signaling pathway. May also participate in UV radiation-induced apoptosis and have a ligand-independent stimulatory effect on chemotactic cell migration. During development, may function in distinctive aspects of pattern formation and subsequently in development of several fetal tissues. Involved for instance in angiogenesis, in early hindbrain development and epithelial proliferation and branching morphogenesis during mammary gland development. Engaged by the ligand ephrin-A5/EFNA5 may regulate lens fiber cells shape and interactions and be important for lens transparency development and maintenance. With ephrin-A2/EFNA2 may play a role in bone remodeling through regulation of osteoclastogenesis and osteoblastogenesis.</text>
</comment>
<comment type="function">
    <text evidence="27">(Microbial infection) Acts as a receptor for hepatitis C virus (HCV) in hepatocytes and facilitates its cell entry. Mediates HCV entry by promoting the formation of the CD81-CLDN1 receptor complexes that are essential for HCV entry and by enhancing membrane fusion of cells expressing HCV envelope glycoproteins.</text>
</comment>
<comment type="function">
    <text evidence="39">Acts as a receptor for human cytomegalovirus (HCMV) to mediate viral entry and fusion in glioblastoma cells.</text>
</comment>
<comment type="catalytic activity">
    <reaction evidence="8 28">
        <text>L-tyrosyl-[protein] + ATP = O-phospho-L-tyrosyl-[protein] + ADP + H(+)</text>
        <dbReference type="Rhea" id="RHEA:10596"/>
        <dbReference type="Rhea" id="RHEA-COMP:10136"/>
        <dbReference type="Rhea" id="RHEA-COMP:20101"/>
        <dbReference type="ChEBI" id="CHEBI:15378"/>
        <dbReference type="ChEBI" id="CHEBI:30616"/>
        <dbReference type="ChEBI" id="CHEBI:46858"/>
        <dbReference type="ChEBI" id="CHEBI:61978"/>
        <dbReference type="ChEBI" id="CHEBI:456216"/>
        <dbReference type="EC" id="2.7.10.1"/>
    </reaction>
</comment>
<comment type="subunit">
    <text evidence="2 9 10 11 12 20 24 25 29 32 33 38">Homodimer. Interacts with SLA. Interacts (phosphorylated form) with VAV2, VAV3 and PI3-kinase p85 subunit (PIK3R1, PIK3R2 or PIK3R3); critical for the EFNA1-induced activation of RAC1 which stimulates cell migration (By similarity). Interacts with INPPL1; regulates activated EPHA2 endocytosis and degradation. Interacts (inactivated form) with PTK2/FAK1 and interacts (EFNA1 ligand-activated form) with PTPN11; regulates integrin-mediated adhesion. Interacts with ARHGEF16, DOCK4 and ELMO2; mediates ligand-independent activation of RAC1 which stimulates cell migration. Interacts with CLDN4; phosphorylates CLDN4 and may regulate tight junctions. Interacts with ACP1. Interacts (via SAM domain) with ANKS1A (via SAM domain). Interacts with CEMIP. Interacts with NCK1; may regulate EPHA2 activity in cell migration and adhesion. Interacts with TIMD4 (PubMed:34067457).</text>
</comment>
<comment type="subunit">
    <text evidence="31">(Microbial infection) Interacts with human herpes virus 8/HHV-8 glycoprotein L/gL and glycoprotein H/gH heterodimer; this interaction triggers EPHA2 phosphorylation and endocytosis, allowing virus entry.</text>
</comment>
<comment type="subunit">
    <text evidence="39">(Microbial infection) Interacts with human cytomegalovirus (HCMV) glycoprotein L/gL and glycoprotein H/gH heterodimer.</text>
</comment>
<comment type="subunit">
    <text evidence="36 37">(Microbial infection) Interacts with Epstein-Barr virus/HHV-4 glycoprotein L/gL and glycoprotein H/gH heterodimer; this interaction facilitates virus internalization and fusion.</text>
</comment>
<comment type="interaction">
    <interactant intactId="EBI-702104">
        <id>P29317</id>
    </interactant>
    <interactant intactId="EBI-2850927">
        <id>P30530</id>
        <label>AXL</label>
    </interactant>
    <organismsDiffer>false</organismsDiffer>
    <experiments>2</experiments>
</comment>
<comment type="interaction">
    <interactant intactId="EBI-702104">
        <id>P29317</id>
    </interactant>
    <interactant intactId="EBI-491549">
        <id>P35222</id>
        <label>CTNNB1</label>
    </interactant>
    <organismsDiffer>false</organismsDiffer>
    <experiments>2</experiments>
</comment>
<comment type="interaction">
    <interactant intactId="EBI-702104">
        <id>P29317</id>
    </interactant>
    <interactant intactId="EBI-715194">
        <id>P20827</id>
        <label>EFNA1</label>
    </interactant>
    <organismsDiffer>false</organismsDiffer>
    <experiments>9</experiments>
</comment>
<comment type="interaction">
    <interactant intactId="EBI-702104">
        <id>P29317</id>
    </interactant>
    <interactant intactId="EBI-1753674">
        <id>P52803</id>
        <label>EFNA5</label>
    </interactant>
    <organismsDiffer>false</organismsDiffer>
    <experiments>8</experiments>
</comment>
<comment type="interaction">
    <interactant intactId="EBI-702104">
        <id>P29317</id>
    </interactant>
    <interactant intactId="EBI-1641575">
        <id>P29320</id>
        <label>EPHA3</label>
    </interactant>
    <organismsDiffer>false</organismsDiffer>
    <experiments>3</experiments>
</comment>
<comment type="interaction">
    <interactant intactId="EBI-702104">
        <id>P29317</id>
    </interactant>
    <interactant intactId="EBI-1383718">
        <id>P54756</id>
        <label>EPHA5</label>
    </interactant>
    <organismsDiffer>false</organismsDiffer>
    <experiments>3</experiments>
</comment>
<comment type="interaction">
    <interactant intactId="EBI-702104">
        <id>P29317</id>
    </interactant>
    <interactant intactId="EBI-3950019">
        <id>Q9UF33</id>
        <label>EPHA6</label>
    </interactant>
    <organismsDiffer>false</organismsDiffer>
    <experiments>4</experiments>
</comment>
<comment type="interaction">
    <interactant intactId="EBI-702104">
        <id>P29317</id>
    </interactant>
    <interactant intactId="EBI-1383428">
        <id>Q15375</id>
        <label>EPHA7</label>
    </interactant>
    <organismsDiffer>false</organismsDiffer>
    <experiments>7</experiments>
</comment>
<comment type="interaction">
    <interactant intactId="EBI-702104">
        <id>P29317</id>
    </interactant>
    <interactant intactId="EBI-352572">
        <id>P08238</id>
        <label>HSP90AB1</label>
    </interactant>
    <organismsDiffer>false</organismsDiffer>
    <experiments>2</experiments>
</comment>
<comment type="interaction">
    <interactant intactId="EBI-702104">
        <id>P29317</id>
    </interactant>
    <interactant intactId="EBI-15963021">
        <id>O15357-1</id>
        <label>INPPL1</label>
    </interactant>
    <organismsDiffer>false</organismsDiffer>
    <experiments>3</experiments>
</comment>
<comment type="interaction">
    <interactant intactId="EBI-702104">
        <id>P29317</id>
    </interactant>
    <interactant intactId="EBI-6596163">
        <id>P29376</id>
        <label>LTK</label>
    </interactant>
    <organismsDiffer>false</organismsDiffer>
    <experiments>3</experiments>
</comment>
<comment type="interaction">
    <interactant intactId="EBI-702104">
        <id>P29317</id>
    </interactant>
    <interactant intactId="EBI-702142">
        <id>Q05397</id>
        <label>PTK2</label>
    </interactant>
    <organismsDiffer>false</organismsDiffer>
    <experiments>3</experiments>
</comment>
<comment type="interaction">
    <interactant intactId="EBI-702104">
        <id>P29317</id>
    </interactant>
    <interactant intactId="EBI-297779">
        <id>Q06124</id>
        <label>PTPN11</label>
    </interactant>
    <organismsDiffer>false</organismsDiffer>
    <experiments>3</experiments>
</comment>
<comment type="subcellular location">
    <subcellularLocation>
        <location evidence="16 21 23 26 38">Cell membrane</location>
        <topology evidence="3">Single-pass type I membrane protein</topology>
    </subcellularLocation>
    <subcellularLocation>
        <location evidence="21">Cell projection</location>
        <location evidence="21">Ruffle membrane</location>
        <topology evidence="3">Single-pass type I membrane protein</topology>
    </subcellularLocation>
    <subcellularLocation>
        <location evidence="21">Cell projection</location>
        <location evidence="21">Lamellipodium membrane</location>
        <topology evidence="3">Single-pass type I membrane protein</topology>
    </subcellularLocation>
    <subcellularLocation>
        <location evidence="9">Cell junction</location>
        <location evidence="9">Focal adhesion</location>
    </subcellularLocation>
    <text evidence="16 21 26 34">Present at regions of cell-cell contacts but also at the leading edge of migrating cells (PubMed:19573808, PubMed:20861311). Relocates from the plasma membrane to the cytoplasmic and perinuclear regions in cancer cells (PubMed:18794797).</text>
</comment>
<comment type="alternative products">
    <event type="alternative splicing"/>
    <isoform>
        <id>P29317-1</id>
        <name>1</name>
        <sequence type="displayed"/>
    </isoform>
    <isoform>
        <id>P29317-2</id>
        <name>2</name>
        <sequence type="described" ref="VSP_056014 VSP_056015"/>
    </isoform>
</comment>
<comment type="tissue specificity">
    <text evidence="13">Expressed in brain and glioma tissue and glioma cell lines (at protein level). Expressed most highly in tissues that contain a high proportion of epithelial cells, e.g. skin, intestine, lung, and ovary.</text>
</comment>
<comment type="induction">
    <text evidence="15">Up-regulated by UV irradiation via a TP53-independent, MAPK-dependent mechanism.</text>
</comment>
<comment type="PTM">
    <text evidence="9 16 21 32 34 35">Autophosphorylates. Phosphorylated on tyrosine upon binding and activation by EFNA1. Phosphorylated residues Tyr-588 and Tyr-594 are required for binding VAV2 and VAV3 while phosphorylated residues Tyr-735 and Tyr-930 are required for binding PI3-kinase p85 subunit (PIK3R1, PIK3R2 or PIK3R3). These phosphorylated residues are critical for recruitment of VAV2 and VAV3 and PI3-kinase p85 subunit which transduce downstream signaling to activate RAC1 GTPase and cell migration. Dephosphorylation of Tyr-930 by PTPRF prevents the interaction of EPHA2 with NCK1. Phosphorylated at Ser-897 by PKB; serum-induced phosphorylation which targets EPHA2 to the cell leading edge and stimulates cell migration. Phosphorylation by PKB is inhibited by EFNA1-activated EPHA2 which regulates PKB activity via a reciprocal regulatory loop. Phosphorylated at Ser-897 in response to TNF by RPS6KA1 and RPS6KA3; RPS6KA-EPHA2 signaling pathway controls cell migration (PubMed:26158630). Phosphorylated at Ser-897 by PKA; blocks cell retraction induced by EPHA2 kinase activity (PubMed:27385333). Dephosphorylated by ACP1.</text>
</comment>
<comment type="PTM">
    <text evidence="1">Ubiquitinated by CHIP/STUB1. Ubiquitination is regulated by the HSP90 chaperone and regulates the receptor stability and activity through proteasomal degradation. ANKS1A prevents ubiquitination and degradation (By similarity).</text>
</comment>
<comment type="disease" evidence="17 19 22 30">
    <disease id="DI-02506">
        <name>Cataract 6, multiple types</name>
        <acronym>CTRCT6</acronym>
        <description>An opacification of the crystalline lens of the eye that frequently results in visual impairment or blindness. Opacities vary in morphology, are often confined to a portion of the lens, and may be static or progressive. CTRCT6 includes posterior polar and age-related cortical cataracts, among others. Posterior polar cataract is a subcapsular opacity, usually disk-shaped, located at the back of the lens. Age-related cortical cataract is a developmental punctate opacity restricted to the cortex. The cataract is white or cerulean, increases in number with age, but rarely affects vision.</description>
        <dbReference type="MIM" id="116600"/>
    </disease>
    <text>The disease is caused by variants affecting the gene represented in this entry.</text>
</comment>
<comment type="disease">
    <text evidence="21">Overexpressed in several cancer types and promotes malignancy.</text>
</comment>
<comment type="similarity">
    <text evidence="4">Belongs to the protein kinase superfamily. Tyr protein kinase family. Ephrin receptor subfamily.</text>
</comment>
<comment type="online information" name="Atlas of Genetics and Cytogenetics in Oncology and Haematology">
    <link uri="https://atlasgeneticsoncology.org/gene/40462/EPHA2"/>
</comment>
<name>EPHA2_HUMAN</name>
<feature type="signal peptide" evidence="3">
    <location>
        <begin position="1"/>
        <end position="23"/>
    </location>
</feature>
<feature type="chain" id="PRO_0000016800" description="Ephrin type-A receptor 2">
    <location>
        <begin position="24"/>
        <end position="976"/>
    </location>
</feature>
<feature type="topological domain" description="Extracellular" evidence="3">
    <location>
        <begin position="24"/>
        <end position="537"/>
    </location>
</feature>
<feature type="transmembrane region" description="Helical" evidence="3">
    <location>
        <begin position="538"/>
        <end position="558"/>
    </location>
</feature>
<feature type="topological domain" description="Cytoplasmic" evidence="3">
    <location>
        <begin position="559"/>
        <end position="976"/>
    </location>
</feature>
<feature type="domain" description="Eph LBD" evidence="7">
    <location>
        <begin position="28"/>
        <end position="206"/>
    </location>
</feature>
<feature type="domain" description="Fibronectin type-III 1" evidence="6">
    <location>
        <begin position="328"/>
        <end position="432"/>
    </location>
</feature>
<feature type="domain" description="Fibronectin type-III 2" evidence="6">
    <location>
        <begin position="438"/>
        <end position="529"/>
    </location>
</feature>
<feature type="domain" description="Protein kinase" evidence="4">
    <location>
        <begin position="613"/>
        <end position="875"/>
    </location>
</feature>
<feature type="domain" description="SAM" evidence="5">
    <location>
        <begin position="904"/>
        <end position="968"/>
    </location>
</feature>
<feature type="region of interest" description="Mediates interaction with CLDN4" evidence="11">
    <location>
        <begin position="1"/>
        <end position="206"/>
    </location>
</feature>
<feature type="region of interest" description="Mediates interaction with ARHGEF16 and ELMO2" evidence="25">
    <location>
        <begin position="606"/>
        <end position="906"/>
    </location>
</feature>
<feature type="region of interest" description="Negatively regulates interaction with ARHGEF16" evidence="25">
    <location>
        <begin position="886"/>
        <end position="976"/>
    </location>
</feature>
<feature type="short sequence motif" description="PDZ-binding" evidence="3">
    <location>
        <begin position="974"/>
        <end position="976"/>
    </location>
</feature>
<feature type="active site" description="Proton acceptor" evidence="4 8">
    <location>
        <position position="739"/>
    </location>
</feature>
<feature type="binding site" evidence="4">
    <location>
        <begin position="619"/>
        <end position="627"/>
    </location>
    <ligand>
        <name>ATP</name>
        <dbReference type="ChEBI" id="CHEBI:30616"/>
    </ligand>
</feature>
<feature type="binding site" evidence="4">
    <location>
        <position position="646"/>
    </location>
    <ligand>
        <name>ATP</name>
        <dbReference type="ChEBI" id="CHEBI:30616"/>
    </ligand>
</feature>
<feature type="modified residue" description="Phosphoserine" evidence="42 43 44">
    <location>
        <position position="570"/>
    </location>
</feature>
<feature type="modified residue" description="Phosphotyrosine" evidence="45">
    <location>
        <position position="575"/>
    </location>
</feature>
<feature type="modified residue" description="Phosphoserine" evidence="43">
    <location>
        <position position="579"/>
    </location>
</feature>
<feature type="modified residue" description="Phosphotyrosine; by autocatalysis" evidence="1">
    <location>
        <position position="588"/>
    </location>
</feature>
<feature type="modified residue" description="Phosphotyrosine" evidence="2">
    <location>
        <position position="594"/>
    </location>
</feature>
<feature type="modified residue" description="Phosphotyrosine" evidence="44">
    <location>
        <position position="628"/>
    </location>
</feature>
<feature type="modified residue" description="Phosphothreonine" evidence="43 44">
    <location>
        <position position="647"/>
    </location>
</feature>
<feature type="modified residue" description="Phosphotyrosine; by autocatalysis" evidence="2">
    <location>
        <position position="735"/>
    </location>
</feature>
<feature type="modified residue" description="Phosphotyrosine" evidence="2">
    <location>
        <position position="772"/>
    </location>
</feature>
<feature type="modified residue" description="Phosphoserine" evidence="44">
    <location>
        <position position="869"/>
    </location>
</feature>
<feature type="modified residue" description="Phosphoserine" evidence="42 45">
    <location>
        <position position="892"/>
    </location>
</feature>
<feature type="modified residue" description="Phosphoserine; by PKB/AKT1, RPS6KA1, RPS6KA3 AND PKA" evidence="21 34 35 45">
    <location>
        <position position="897"/>
    </location>
</feature>
<feature type="modified residue" description="Phosphoserine" evidence="35 42 45">
    <location>
        <position position="901"/>
    </location>
</feature>
<feature type="modified residue" description="Phosphotyrosine; by autocatalysis" evidence="3">
    <location>
        <position position="921"/>
    </location>
</feature>
<feature type="modified residue" description="Phosphotyrosine" evidence="32">
    <location>
        <position position="930"/>
    </location>
</feature>
<feature type="glycosylation site" description="N-linked (GlcNAc...) asparagine" evidence="3">
    <location>
        <position position="407"/>
    </location>
</feature>
<feature type="glycosylation site" description="N-linked (GlcNAc...) asparagine" evidence="18">
    <location>
        <position position="435"/>
    </location>
</feature>
<feature type="disulfide bond">
    <location>
        <begin position="70"/>
        <end position="188"/>
    </location>
</feature>
<feature type="disulfide bond">
    <location>
        <begin position="105"/>
        <end position="115"/>
    </location>
</feature>
<feature type="splice variant" id="VSP_056014" description="In isoform 2." evidence="40">
    <original>GDSNSYNVRRTEGFSVTLDDL</original>
    <variation>VTPRGAGLALAGPTAGDRLVT</variation>
    <location>
        <begin position="477"/>
        <end position="497"/>
    </location>
</feature>
<feature type="splice variant" id="VSP_056015" description="In isoform 2." evidence="40">
    <location>
        <begin position="498"/>
        <end position="976"/>
    </location>
</feature>
<feature type="sequence variant" id="VAR_055989" description="In dbSNP:rs1058372.">
    <original>K</original>
    <variation>N</variation>
    <location>
        <position position="99"/>
    </location>
</feature>
<feature type="sequence variant" id="VAR_042121" description="In dbSNP:rs34192549." evidence="14">
    <original>G</original>
    <variation>R</variation>
    <location>
        <position position="391"/>
    </location>
</feature>
<feature type="sequence variant" id="VAR_042122" description="In dbSNP:rs55747232." evidence="14">
    <original>T</original>
    <variation>M</variation>
    <location>
        <position position="511"/>
    </location>
</feature>
<feature type="sequence variant" id="VAR_042123" description="In dbSNP:rs56198600." evidence="14">
    <original>R</original>
    <variation>H</variation>
    <location>
        <position position="568"/>
    </location>
</feature>
<feature type="sequence variant" id="VAR_055990" description="In dbSNP:rs34021505.">
    <original>M</original>
    <variation>T</variation>
    <location>
        <position position="631"/>
    </location>
</feature>
<feature type="sequence variant" id="VAR_062532" description="In CTRCT6; retained in the cytoplasm and constitutively active it alters EPHA2 signaling; dbSNP:rs116506614." evidence="22">
    <original>R</original>
    <variation>Q</variation>
    <location>
        <position position="721"/>
    </location>
</feature>
<feature type="sequence variant" id="VAR_042124" description="In a gastric adenocarcinoma sample; somatic mutation; dbSNP:rs922655349." evidence="14">
    <original>G</original>
    <variation>S</variation>
    <location>
        <position position="777"/>
    </location>
</feature>
<feature type="sequence variant" id="VAR_042125" description="In dbSNP:rs35903225." evidence="14">
    <original>R</original>
    <variation>H</variation>
    <location>
        <position position="876"/>
    </location>
</feature>
<feature type="sequence variant" id="VAR_058907" description="In CTRCT6; reduced protein stability and reduced ability to stimulate cell migration in absence of its ephrin ligand; dbSNP:rs137853200." evidence="19 30">
    <original>T</original>
    <variation>I</variation>
    <location>
        <position position="940"/>
    </location>
</feature>
<feature type="sequence variant" id="VAR_058908" description="In CTRCT6; reduced protein stability and reduced ability to stimulate cell migration in absence of its ephrin ligand; dbSNP:rs137853199." evidence="17 30">
    <original>G</original>
    <variation>W</variation>
    <location>
        <position position="948"/>
    </location>
</feature>
<feature type="mutagenesis site" description="Significantly reduced response to EFNA1." evidence="20">
    <original>R</original>
    <variation>E</variation>
    <location>
        <position position="103"/>
    </location>
</feature>
<feature type="mutagenesis site" description="Loss of kinase activity." evidence="11">
    <original>K</original>
    <variation>M</variation>
    <location>
        <position position="646"/>
    </location>
</feature>
<feature type="mutagenesis site" description="Increases serum-induced chemotaxis. Loss of EFNA1-dependent regulation of cell migration." evidence="21">
    <original>D</original>
    <variation>N</variation>
    <location>
        <position position="739"/>
    </location>
</feature>
<feature type="mutagenesis site" description="Loss of serum-induced phosphorylation by PKB. Loss of serum-induced chemotaxis." evidence="21">
    <original>S</original>
    <variation>A</variation>
    <variation>D</variation>
    <location>
        <position position="897"/>
    </location>
</feature>
<feature type="sequence conflict" description="In Ref. 1; AAA53375." evidence="41" ref="1">
    <original>IFIELK</original>
    <variation>NNFELN</variation>
    <location>
        <begin position="94"/>
        <end position="99"/>
    </location>
</feature>
<feature type="strand" evidence="54">
    <location>
        <begin position="28"/>
        <end position="33"/>
    </location>
</feature>
<feature type="helix" evidence="54">
    <location>
        <begin position="34"/>
        <end position="37"/>
    </location>
</feature>
<feature type="strand" evidence="54">
    <location>
        <begin position="44"/>
        <end position="47"/>
    </location>
</feature>
<feature type="turn" evidence="55">
    <location>
        <begin position="48"/>
        <end position="50"/>
    </location>
</feature>
<feature type="strand" evidence="54">
    <location>
        <begin position="53"/>
        <end position="57"/>
    </location>
</feature>
<feature type="strand" evidence="54">
    <location>
        <begin position="59"/>
        <end position="62"/>
    </location>
</feature>
<feature type="strand" evidence="54">
    <location>
        <begin position="64"/>
        <end position="70"/>
    </location>
</feature>
<feature type="strand" evidence="54">
    <location>
        <begin position="73"/>
        <end position="75"/>
    </location>
</feature>
<feature type="strand" evidence="54">
    <location>
        <begin position="79"/>
        <end position="82"/>
    </location>
</feature>
<feature type="strand" evidence="54">
    <location>
        <begin position="92"/>
        <end position="103"/>
    </location>
</feature>
<feature type="helix" evidence="54">
    <location>
        <begin position="105"/>
        <end position="107"/>
    </location>
</feature>
<feature type="strand" evidence="48">
    <location>
        <begin position="108"/>
        <end position="110"/>
    </location>
</feature>
<feature type="turn" evidence="54">
    <location>
        <begin position="112"/>
        <end position="114"/>
    </location>
</feature>
<feature type="strand" evidence="54">
    <location>
        <begin position="119"/>
        <end position="128"/>
    </location>
</feature>
<feature type="helix" evidence="54">
    <location>
        <begin position="136"/>
        <end position="138"/>
    </location>
</feature>
<feature type="strand" evidence="54">
    <location>
        <begin position="140"/>
        <end position="145"/>
    </location>
</feature>
<feature type="strand" evidence="58">
    <location>
        <begin position="148"/>
        <end position="151"/>
    </location>
</feature>
<feature type="helix" evidence="54">
    <location>
        <begin position="153"/>
        <end position="157"/>
    </location>
</feature>
<feature type="strand" evidence="54">
    <location>
        <begin position="164"/>
        <end position="170"/>
    </location>
</feature>
<feature type="strand" evidence="54">
    <location>
        <begin position="175"/>
        <end position="199"/>
    </location>
</feature>
<feature type="strand" evidence="61">
    <location>
        <begin position="204"/>
        <end position="206"/>
    </location>
</feature>
<feature type="strand" evidence="61">
    <location>
        <begin position="209"/>
        <end position="211"/>
    </location>
</feature>
<feature type="strand" evidence="61">
    <location>
        <begin position="214"/>
        <end position="217"/>
    </location>
</feature>
<feature type="helix" evidence="61">
    <location>
        <begin position="221"/>
        <end position="224"/>
    </location>
</feature>
<feature type="strand" evidence="61">
    <location>
        <begin position="225"/>
        <end position="227"/>
    </location>
</feature>
<feature type="strand" evidence="49">
    <location>
        <begin position="238"/>
        <end position="240"/>
    </location>
</feature>
<feature type="strand" evidence="61">
    <location>
        <begin position="244"/>
        <end position="247"/>
    </location>
</feature>
<feature type="strand" evidence="62">
    <location>
        <begin position="253"/>
        <end position="257"/>
    </location>
</feature>
<feature type="strand" evidence="61">
    <location>
        <begin position="266"/>
        <end position="269"/>
    </location>
</feature>
<feature type="strand" evidence="61">
    <location>
        <begin position="272"/>
        <end position="275"/>
    </location>
</feature>
<feature type="strand" evidence="61">
    <location>
        <begin position="284"/>
        <end position="287"/>
    </location>
</feature>
<feature type="strand" evidence="47">
    <location>
        <begin position="295"/>
        <end position="298"/>
    </location>
</feature>
<feature type="strand" evidence="62">
    <location>
        <begin position="304"/>
        <end position="306"/>
    </location>
</feature>
<feature type="strand" evidence="47">
    <location>
        <begin position="335"/>
        <end position="338"/>
    </location>
</feature>
<feature type="strand" evidence="47">
    <location>
        <begin position="343"/>
        <end position="348"/>
    </location>
</feature>
<feature type="strand" evidence="47">
    <location>
        <begin position="361"/>
        <end position="369"/>
    </location>
</feature>
<feature type="strand" evidence="47">
    <location>
        <begin position="376"/>
        <end position="378"/>
    </location>
</feature>
<feature type="strand" evidence="47">
    <location>
        <begin position="384"/>
        <end position="387"/>
    </location>
</feature>
<feature type="strand" evidence="47">
    <location>
        <begin position="389"/>
        <end position="392"/>
    </location>
</feature>
<feature type="strand" evidence="47">
    <location>
        <begin position="394"/>
        <end position="400"/>
    </location>
</feature>
<feature type="strand" evidence="47">
    <location>
        <begin position="407"/>
        <end position="415"/>
    </location>
</feature>
<feature type="helix" evidence="47">
    <location>
        <begin position="419"/>
        <end position="421"/>
    </location>
</feature>
<feature type="strand" evidence="47">
    <location>
        <begin position="427"/>
        <end position="433"/>
    </location>
</feature>
<feature type="strand" evidence="47">
    <location>
        <begin position="441"/>
        <end position="446"/>
    </location>
</feature>
<feature type="strand" evidence="47">
    <location>
        <begin position="453"/>
        <end position="457"/>
    </location>
</feature>
<feature type="turn" evidence="47">
    <location>
        <begin position="460"/>
        <end position="465"/>
    </location>
</feature>
<feature type="strand" evidence="47">
    <location>
        <begin position="467"/>
        <end position="475"/>
    </location>
</feature>
<feature type="strand" evidence="47">
    <location>
        <begin position="483"/>
        <end position="493"/>
    </location>
</feature>
<feature type="strand" evidence="47">
    <location>
        <begin position="502"/>
        <end position="510"/>
    </location>
</feature>
<feature type="strand" evidence="47">
    <location>
        <begin position="522"/>
        <end position="525"/>
    </location>
</feature>
<feature type="helix" evidence="46">
    <location>
        <begin position="536"/>
        <end position="556"/>
    </location>
</feature>
<feature type="strand" evidence="46">
    <location>
        <begin position="557"/>
        <end position="561"/>
    </location>
</feature>
<feature type="helix" evidence="51">
    <location>
        <begin position="591"/>
        <end position="594"/>
    </location>
</feature>
<feature type="helix" evidence="50">
    <location>
        <begin position="597"/>
        <end position="600"/>
    </location>
</feature>
<feature type="turn" evidence="56">
    <location>
        <begin position="601"/>
        <end position="604"/>
    </location>
</feature>
<feature type="helix" evidence="56">
    <location>
        <begin position="610"/>
        <end position="612"/>
    </location>
</feature>
<feature type="strand" evidence="56">
    <location>
        <begin position="613"/>
        <end position="622"/>
    </location>
</feature>
<feature type="strand" evidence="56">
    <location>
        <begin position="625"/>
        <end position="632"/>
    </location>
</feature>
<feature type="helix" evidence="53">
    <location>
        <begin position="635"/>
        <end position="637"/>
    </location>
</feature>
<feature type="strand" evidence="56">
    <location>
        <begin position="641"/>
        <end position="648"/>
    </location>
</feature>
<feature type="helix" evidence="56">
    <location>
        <begin position="654"/>
        <end position="669"/>
    </location>
</feature>
<feature type="strand" evidence="56">
    <location>
        <begin position="678"/>
        <end position="682"/>
    </location>
</feature>
<feature type="strand" evidence="56">
    <location>
        <begin position="684"/>
        <end position="693"/>
    </location>
</feature>
<feature type="helix" evidence="56">
    <location>
        <begin position="700"/>
        <end position="706"/>
    </location>
</feature>
<feature type="turn" evidence="57">
    <location>
        <begin position="707"/>
        <end position="709"/>
    </location>
</feature>
<feature type="helix" evidence="56">
    <location>
        <begin position="713"/>
        <end position="732"/>
    </location>
</feature>
<feature type="helix" evidence="56">
    <location>
        <begin position="742"/>
        <end position="744"/>
    </location>
</feature>
<feature type="strand" evidence="56">
    <location>
        <begin position="745"/>
        <end position="747"/>
    </location>
</feature>
<feature type="strand" evidence="56">
    <location>
        <begin position="753"/>
        <end position="755"/>
    </location>
</feature>
<feature type="helix" evidence="52">
    <location>
        <begin position="762"/>
        <end position="766"/>
    </location>
</feature>
<feature type="strand" evidence="52">
    <location>
        <begin position="770"/>
        <end position="772"/>
    </location>
</feature>
<feature type="strand" evidence="53">
    <location>
        <begin position="776"/>
        <end position="778"/>
    </location>
</feature>
<feature type="helix" evidence="56">
    <location>
        <begin position="781"/>
        <end position="783"/>
    </location>
</feature>
<feature type="helix" evidence="56">
    <location>
        <begin position="786"/>
        <end position="791"/>
    </location>
</feature>
<feature type="helix" evidence="56">
    <location>
        <begin position="796"/>
        <end position="811"/>
    </location>
</feature>
<feature type="turn" evidence="56">
    <location>
        <begin position="817"/>
        <end position="820"/>
    </location>
</feature>
<feature type="helix" evidence="56">
    <location>
        <begin position="823"/>
        <end position="831"/>
    </location>
</feature>
<feature type="helix" evidence="56">
    <location>
        <begin position="844"/>
        <end position="853"/>
    </location>
</feature>
<feature type="helix" evidence="56">
    <location>
        <begin position="858"/>
        <end position="860"/>
    </location>
</feature>
<feature type="helix" evidence="56">
    <location>
        <begin position="864"/>
        <end position="876"/>
    </location>
</feature>
<feature type="helix" evidence="56">
    <location>
        <begin position="878"/>
        <end position="881"/>
    </location>
</feature>
<feature type="strand" evidence="56">
    <location>
        <begin position="882"/>
        <end position="884"/>
    </location>
</feature>
<feature type="helix" evidence="60">
    <location>
        <begin position="889"/>
        <end position="892"/>
    </location>
</feature>
<feature type="helix" evidence="59">
    <location>
        <begin position="909"/>
        <end position="915"/>
    </location>
</feature>
<feature type="helix" evidence="59">
    <location>
        <begin position="919"/>
        <end position="921"/>
    </location>
</feature>
<feature type="helix" evidence="59">
    <location>
        <begin position="922"/>
        <end position="927"/>
    </location>
</feature>
<feature type="helix" evidence="59">
    <location>
        <begin position="933"/>
        <end position="936"/>
    </location>
</feature>
<feature type="helix" evidence="59">
    <location>
        <begin position="941"/>
        <end position="946"/>
    </location>
</feature>
<feature type="helix" evidence="59">
    <location>
        <begin position="952"/>
        <end position="969"/>
    </location>
</feature>
<dbReference type="EC" id="2.7.10.1"/>
<dbReference type="EMBL" id="M59371">
    <property type="protein sequence ID" value="AAA53375.1"/>
    <property type="molecule type" value="mRNA"/>
</dbReference>
<dbReference type="EMBL" id="EU826606">
    <property type="protein sequence ID" value="ACF47642.1"/>
    <property type="molecule type" value="mRNA"/>
</dbReference>
<dbReference type="EMBL" id="AL451042">
    <property type="status" value="NOT_ANNOTATED_CDS"/>
    <property type="molecule type" value="Genomic_DNA"/>
</dbReference>
<dbReference type="EMBL" id="CH471167">
    <property type="protein sequence ID" value="EAW51769.1"/>
    <property type="molecule type" value="Genomic_DNA"/>
</dbReference>
<dbReference type="EMBL" id="BC037166">
    <property type="protein sequence ID" value="AAH37166.1"/>
    <property type="molecule type" value="mRNA"/>
</dbReference>
<dbReference type="CCDS" id="CCDS169.1">
    <molecule id="P29317-1"/>
</dbReference>
<dbReference type="PIR" id="A36355">
    <property type="entry name" value="A36355"/>
</dbReference>
<dbReference type="RefSeq" id="NP_004422.2">
    <molecule id="P29317-1"/>
    <property type="nucleotide sequence ID" value="NM_004431.4"/>
</dbReference>
<dbReference type="PDB" id="1MQB">
    <property type="method" value="X-ray"/>
    <property type="resolution" value="2.30 A"/>
    <property type="chains" value="A/B=596-900"/>
</dbReference>
<dbReference type="PDB" id="2E8N">
    <property type="method" value="NMR"/>
    <property type="chains" value="A=902-976"/>
</dbReference>
<dbReference type="PDB" id="2K9Y">
    <property type="method" value="NMR"/>
    <property type="chains" value="A/B=523-563"/>
</dbReference>
<dbReference type="PDB" id="2KSO">
    <property type="method" value="NMR"/>
    <property type="chains" value="A=908-972"/>
</dbReference>
<dbReference type="PDB" id="2X10">
    <property type="method" value="X-ray"/>
    <property type="resolution" value="3.00 A"/>
    <property type="chains" value="A=27-534"/>
</dbReference>
<dbReference type="PDB" id="2X11">
    <property type="method" value="X-ray"/>
    <property type="resolution" value="4.83 A"/>
    <property type="chains" value="A=27-534"/>
</dbReference>
<dbReference type="PDB" id="3C8X">
    <property type="method" value="X-ray"/>
    <property type="resolution" value="1.95 A"/>
    <property type="chains" value="A=23-202"/>
</dbReference>
<dbReference type="PDB" id="3CZU">
    <property type="method" value="X-ray"/>
    <property type="resolution" value="2.65 A"/>
    <property type="chains" value="A=23-202"/>
</dbReference>
<dbReference type="PDB" id="3FL7">
    <property type="method" value="X-ray"/>
    <property type="resolution" value="2.50 A"/>
    <property type="chains" value="A=23-531"/>
</dbReference>
<dbReference type="PDB" id="3HEI">
    <property type="method" value="X-ray"/>
    <property type="resolution" value="2.00 A"/>
    <property type="chains" value="A/C/E/G/I/K/M/O=28-201"/>
</dbReference>
<dbReference type="PDB" id="3HPN">
    <property type="method" value="X-ray"/>
    <property type="resolution" value="2.52 A"/>
    <property type="chains" value="A/B/C/D/E/F=28-201"/>
</dbReference>
<dbReference type="PDB" id="3KKA">
    <property type="method" value="X-ray"/>
    <property type="resolution" value="2.40 A"/>
    <property type="chains" value="C/D/E=903-971"/>
</dbReference>
<dbReference type="PDB" id="3MBW">
    <property type="method" value="X-ray"/>
    <property type="resolution" value="2.81 A"/>
    <property type="chains" value="A=23-326"/>
</dbReference>
<dbReference type="PDB" id="3MX0">
    <property type="method" value="X-ray"/>
    <property type="resolution" value="3.51 A"/>
    <property type="chains" value="A/C=27-435"/>
</dbReference>
<dbReference type="PDB" id="3SKJ">
    <property type="method" value="X-ray"/>
    <property type="resolution" value="2.50 A"/>
    <property type="chains" value="E/F=23-202"/>
</dbReference>
<dbReference type="PDB" id="4P2K">
    <property type="method" value="X-ray"/>
    <property type="resolution" value="1.50 A"/>
    <property type="chains" value="A=590-876"/>
</dbReference>
<dbReference type="PDB" id="4PDO">
    <property type="method" value="X-ray"/>
    <property type="resolution" value="2.10 A"/>
    <property type="chains" value="A/B=590-876"/>
</dbReference>
<dbReference type="PDB" id="4TRL">
    <property type="method" value="X-ray"/>
    <property type="resolution" value="2.45 A"/>
    <property type="chains" value="A=590-876"/>
</dbReference>
<dbReference type="PDB" id="5EK7">
    <property type="method" value="X-ray"/>
    <property type="resolution" value="1.90 A"/>
    <property type="chains" value="A/B=583-876"/>
</dbReference>
<dbReference type="PDB" id="5I9U">
    <property type="method" value="X-ray"/>
    <property type="resolution" value="1.89 A"/>
    <property type="chains" value="A=596-900"/>
</dbReference>
<dbReference type="PDB" id="5I9V">
    <property type="method" value="X-ray"/>
    <property type="resolution" value="1.46 A"/>
    <property type="chains" value="A=596-900"/>
</dbReference>
<dbReference type="PDB" id="5I9W">
    <property type="method" value="X-ray"/>
    <property type="resolution" value="1.36 A"/>
    <property type="chains" value="A=596-900"/>
</dbReference>
<dbReference type="PDB" id="5I9X">
    <property type="method" value="X-ray"/>
    <property type="resolution" value="1.43 A"/>
    <property type="chains" value="A=596-900"/>
</dbReference>
<dbReference type="PDB" id="5I9Y">
    <property type="method" value="X-ray"/>
    <property type="resolution" value="1.23 A"/>
    <property type="chains" value="A=596-900"/>
</dbReference>
<dbReference type="PDB" id="5I9Z">
    <property type="method" value="X-ray"/>
    <property type="resolution" value="1.70 A"/>
    <property type="chains" value="A=596-900"/>
</dbReference>
<dbReference type="PDB" id="5IA0">
    <property type="method" value="X-ray"/>
    <property type="resolution" value="1.95 A"/>
    <property type="chains" value="A/B/C=596-900"/>
</dbReference>
<dbReference type="PDB" id="5IA1">
    <property type="method" value="X-ray"/>
    <property type="resolution" value="2.04 A"/>
    <property type="chains" value="A=596-900"/>
</dbReference>
<dbReference type="PDB" id="5IA2">
    <property type="method" value="X-ray"/>
    <property type="resolution" value="1.62 A"/>
    <property type="chains" value="A=596-900"/>
</dbReference>
<dbReference type="PDB" id="5IA3">
    <property type="method" value="X-ray"/>
    <property type="resolution" value="1.79 A"/>
    <property type="chains" value="A=596-900"/>
</dbReference>
<dbReference type="PDB" id="5IA4">
    <property type="method" value="X-ray"/>
    <property type="resolution" value="1.80 A"/>
    <property type="chains" value="A=596-900"/>
</dbReference>
<dbReference type="PDB" id="5IA5">
    <property type="method" value="X-ray"/>
    <property type="resolution" value="1.78 A"/>
    <property type="chains" value="A=596-900"/>
</dbReference>
<dbReference type="PDB" id="5NJZ">
    <property type="method" value="X-ray"/>
    <property type="resolution" value="1.77 A"/>
    <property type="chains" value="A=596-900"/>
</dbReference>
<dbReference type="PDB" id="5NK0">
    <property type="method" value="X-ray"/>
    <property type="resolution" value="1.60 A"/>
    <property type="chains" value="A=596-900"/>
</dbReference>
<dbReference type="PDB" id="5NK1">
    <property type="method" value="X-ray"/>
    <property type="resolution" value="1.55 A"/>
    <property type="chains" value="A=596-900"/>
</dbReference>
<dbReference type="PDB" id="5NK2">
    <property type="method" value="X-ray"/>
    <property type="resolution" value="1.65 A"/>
    <property type="chains" value="A=596-900"/>
</dbReference>
<dbReference type="PDB" id="5NK3">
    <property type="method" value="X-ray"/>
    <property type="resolution" value="1.59 A"/>
    <property type="chains" value="A=596-900"/>
</dbReference>
<dbReference type="PDB" id="5NK4">
    <property type="method" value="X-ray"/>
    <property type="resolution" value="1.45 A"/>
    <property type="chains" value="A=596-900"/>
</dbReference>
<dbReference type="PDB" id="5NK5">
    <property type="method" value="X-ray"/>
    <property type="resolution" value="1.33 A"/>
    <property type="chains" value="A=596-900"/>
</dbReference>
<dbReference type="PDB" id="5NK6">
    <property type="method" value="X-ray"/>
    <property type="resolution" value="1.27 A"/>
    <property type="chains" value="A=596-900"/>
</dbReference>
<dbReference type="PDB" id="5NK7">
    <property type="method" value="X-ray"/>
    <property type="resolution" value="1.89 A"/>
    <property type="chains" value="A=596-900"/>
</dbReference>
<dbReference type="PDB" id="5NK8">
    <property type="method" value="X-ray"/>
    <property type="resolution" value="1.76 A"/>
    <property type="chains" value="A=596-900"/>
</dbReference>
<dbReference type="PDB" id="5NK9">
    <property type="method" value="X-ray"/>
    <property type="resolution" value="1.59 A"/>
    <property type="chains" value="A=596-900"/>
</dbReference>
<dbReference type="PDB" id="5NKA">
    <property type="method" value="X-ray"/>
    <property type="resolution" value="1.38 A"/>
    <property type="chains" value="A=596-900"/>
</dbReference>
<dbReference type="PDB" id="5NKB">
    <property type="method" value="X-ray"/>
    <property type="resolution" value="1.50 A"/>
    <property type="chains" value="A=596-900"/>
</dbReference>
<dbReference type="PDB" id="5NKC">
    <property type="method" value="X-ray"/>
    <property type="resolution" value="1.45 A"/>
    <property type="chains" value="A=596-900"/>
</dbReference>
<dbReference type="PDB" id="5NKD">
    <property type="method" value="X-ray"/>
    <property type="resolution" value="1.41 A"/>
    <property type="chains" value="A=596-900"/>
</dbReference>
<dbReference type="PDB" id="5NKE">
    <property type="method" value="X-ray"/>
    <property type="resolution" value="1.39 A"/>
    <property type="chains" value="A=596-900"/>
</dbReference>
<dbReference type="PDB" id="5NKF">
    <property type="method" value="X-ray"/>
    <property type="resolution" value="1.10 A"/>
    <property type="chains" value="A=596-900"/>
</dbReference>
<dbReference type="PDB" id="5NKG">
    <property type="method" value="X-ray"/>
    <property type="resolution" value="1.10 A"/>
    <property type="chains" value="A=596-900"/>
</dbReference>
<dbReference type="PDB" id="5NKH">
    <property type="method" value="X-ray"/>
    <property type="resolution" value="1.29 A"/>
    <property type="chains" value="A=596-900"/>
</dbReference>
<dbReference type="PDB" id="5NKI">
    <property type="method" value="X-ray"/>
    <property type="resolution" value="1.68 A"/>
    <property type="chains" value="A=596-900"/>
</dbReference>
<dbReference type="PDB" id="5NZ9">
    <property type="method" value="NMR"/>
    <property type="chains" value="A=945-969"/>
</dbReference>
<dbReference type="PDB" id="6B9L">
    <property type="method" value="X-ray"/>
    <property type="resolution" value="3.20 A"/>
    <property type="chains" value="A/B/C/D=27-200"/>
</dbReference>
<dbReference type="PDB" id="6F7M">
    <property type="method" value="NMR"/>
    <property type="chains" value="A=945-969"/>
</dbReference>
<dbReference type="PDB" id="6F7N">
    <property type="method" value="NMR"/>
    <property type="chains" value="A=951-963"/>
</dbReference>
<dbReference type="PDB" id="6FNF">
    <property type="method" value="X-ray"/>
    <property type="resolution" value="1.56 A"/>
    <property type="chains" value="A=596-900"/>
</dbReference>
<dbReference type="PDB" id="6FNG">
    <property type="method" value="X-ray"/>
    <property type="resolution" value="1.04 A"/>
    <property type="chains" value="A=596-900"/>
</dbReference>
<dbReference type="PDB" id="6FNH">
    <property type="method" value="X-ray"/>
    <property type="resolution" value="1.38 A"/>
    <property type="chains" value="A/B/C=596-900"/>
</dbReference>
<dbReference type="PDB" id="6HES">
    <property type="method" value="X-ray"/>
    <property type="resolution" value="1.13 A"/>
    <property type="chains" value="A=596-900"/>
</dbReference>
<dbReference type="PDB" id="6HET">
    <property type="method" value="X-ray"/>
    <property type="resolution" value="1.21 A"/>
    <property type="chains" value="A=596-900"/>
</dbReference>
<dbReference type="PDB" id="6HEU">
    <property type="method" value="X-ray"/>
    <property type="resolution" value="1.72 A"/>
    <property type="chains" value="A=596-900"/>
</dbReference>
<dbReference type="PDB" id="6HEV">
    <property type="method" value="X-ray"/>
    <property type="resolution" value="1.28 A"/>
    <property type="chains" value="A=596-900"/>
</dbReference>
<dbReference type="PDB" id="6HEW">
    <property type="method" value="X-ray"/>
    <property type="resolution" value="1.27 A"/>
    <property type="chains" value="A=596-900"/>
</dbReference>
<dbReference type="PDB" id="6HEX">
    <property type="method" value="X-ray"/>
    <property type="resolution" value="1.41 A"/>
    <property type="chains" value="A=596-900"/>
</dbReference>
<dbReference type="PDB" id="6HEY">
    <property type="method" value="X-ray"/>
    <property type="resolution" value="1.37 A"/>
    <property type="chains" value="A=596-900"/>
</dbReference>
<dbReference type="PDB" id="6NJZ">
    <property type="method" value="X-ray"/>
    <property type="resolution" value="1.90 A"/>
    <property type="chains" value="A/B=28-200"/>
</dbReference>
<dbReference type="PDB" id="6NK0">
    <property type="method" value="X-ray"/>
    <property type="resolution" value="1.53 A"/>
    <property type="chains" value="A/B=28-200"/>
</dbReference>
<dbReference type="PDB" id="6NK1">
    <property type="method" value="X-ray"/>
    <property type="resolution" value="1.55 A"/>
    <property type="chains" value="A/B=28-200"/>
</dbReference>
<dbReference type="PDB" id="6NK2">
    <property type="method" value="X-ray"/>
    <property type="resolution" value="2.20 A"/>
    <property type="chains" value="A/B=28-200"/>
</dbReference>
<dbReference type="PDB" id="6NKP">
    <property type="method" value="X-ray"/>
    <property type="resolution" value="2.03 A"/>
    <property type="chains" value="A/B=28-200"/>
</dbReference>
<dbReference type="PDB" id="6Q7B">
    <property type="method" value="X-ray"/>
    <property type="resolution" value="1.01 A"/>
    <property type="chains" value="A=596-900"/>
</dbReference>
<dbReference type="PDB" id="6Q7C">
    <property type="method" value="X-ray"/>
    <property type="resolution" value="1.05 A"/>
    <property type="chains" value="A=596-900"/>
</dbReference>
<dbReference type="PDB" id="6Q7D">
    <property type="method" value="X-ray"/>
    <property type="resolution" value="0.98 A"/>
    <property type="chains" value="A=596-900"/>
</dbReference>
<dbReference type="PDB" id="6Q7E">
    <property type="method" value="X-ray"/>
    <property type="resolution" value="1.06 A"/>
    <property type="chains" value="A=596-900"/>
</dbReference>
<dbReference type="PDB" id="6Q7F">
    <property type="method" value="X-ray"/>
    <property type="resolution" value="1.20 A"/>
    <property type="chains" value="A=596-900"/>
</dbReference>
<dbReference type="PDB" id="6Q7G">
    <property type="method" value="X-ray"/>
    <property type="resolution" value="1.05 A"/>
    <property type="chains" value="A=596-900"/>
</dbReference>
<dbReference type="PDB" id="6RW2">
    <property type="method" value="X-ray"/>
    <property type="resolution" value="2.26 A"/>
    <property type="chains" value="A=27-201"/>
</dbReference>
<dbReference type="PDB" id="7B7N">
    <property type="method" value="X-ray"/>
    <property type="resolution" value="2.69 A"/>
    <property type="chains" value="E=23-202"/>
</dbReference>
<dbReference type="PDB" id="7CZE">
    <property type="method" value="X-ray"/>
    <property type="resolution" value="3.00 A"/>
    <property type="chains" value="I/J/K/L=26-200"/>
</dbReference>
<dbReference type="PDB" id="7CZF">
    <property type="method" value="X-ray"/>
    <property type="resolution" value="3.20 A"/>
    <property type="chains" value="A/D=28-206"/>
</dbReference>
<dbReference type="PDB" id="7KJA">
    <property type="method" value="X-ray"/>
    <property type="resolution" value="1.75 A"/>
    <property type="chains" value="A/B=590-976"/>
</dbReference>
<dbReference type="PDB" id="7KJB">
    <property type="method" value="X-ray"/>
    <property type="resolution" value="2.80 A"/>
    <property type="chains" value="A=590-976"/>
</dbReference>
<dbReference type="PDB" id="7KJC">
    <property type="method" value="X-ray"/>
    <property type="resolution" value="2.30 A"/>
    <property type="chains" value="A/B=590-976"/>
</dbReference>
<dbReference type="PDB" id="8BIN">
    <property type="method" value="X-ray"/>
    <property type="resolution" value="1.50 A"/>
    <property type="chains" value="A=596-900"/>
</dbReference>
<dbReference type="PDB" id="8BIO">
    <property type="method" value="X-ray"/>
    <property type="resolution" value="1.60 A"/>
    <property type="chains" value="A=596-900"/>
</dbReference>
<dbReference type="PDB" id="8BK0">
    <property type="method" value="X-ray"/>
    <property type="resolution" value="1.70 A"/>
    <property type="chains" value="A=596-900"/>
</dbReference>
<dbReference type="PDB" id="8BM8">
    <property type="method" value="X-ray"/>
    <property type="resolution" value="1.68 A"/>
    <property type="chains" value="A=596-900"/>
</dbReference>
<dbReference type="PDB" id="8BOC">
    <property type="method" value="X-ray"/>
    <property type="resolution" value="1.90 A"/>
    <property type="chains" value="A=596-900"/>
</dbReference>
<dbReference type="PDB" id="8BOD">
    <property type="method" value="X-ray"/>
    <property type="resolution" value="1.50 A"/>
    <property type="chains" value="A=596-900"/>
</dbReference>
<dbReference type="PDB" id="8BOF">
    <property type="method" value="X-ray"/>
    <property type="resolution" value="1.82 A"/>
    <property type="chains" value="A=596-900"/>
</dbReference>
<dbReference type="PDB" id="8BOG">
    <property type="method" value="X-ray"/>
    <property type="resolution" value="1.47 A"/>
    <property type="chains" value="A=596-900"/>
</dbReference>
<dbReference type="PDB" id="8BOH">
    <property type="method" value="X-ray"/>
    <property type="resolution" value="1.42 A"/>
    <property type="chains" value="A=596-900"/>
</dbReference>
<dbReference type="PDB" id="8BOI">
    <property type="method" value="X-ray"/>
    <property type="resolution" value="1.63 A"/>
    <property type="chains" value="A=596-900"/>
</dbReference>
<dbReference type="PDB" id="8BOK">
    <property type="method" value="X-ray"/>
    <property type="resolution" value="2.02 A"/>
    <property type="chains" value="A=596-900"/>
</dbReference>
<dbReference type="PDB" id="8BOM">
    <property type="method" value="X-ray"/>
    <property type="resolution" value="1.12 A"/>
    <property type="chains" value="A=596-900"/>
</dbReference>
<dbReference type="PDB" id="8QQY">
    <property type="method" value="X-ray"/>
    <property type="resolution" value="1.80 A"/>
    <property type="chains" value="A=596-900"/>
</dbReference>
<dbReference type="PDB" id="8T9B">
    <property type="method" value="X-ray"/>
    <property type="resolution" value="4.20 A"/>
    <property type="chains" value="I/J/K/L=436-529"/>
</dbReference>
<dbReference type="PDB" id="8TRS">
    <property type="method" value="X-ray"/>
    <property type="resolution" value="1.90 A"/>
    <property type="chains" value="D=199-326"/>
</dbReference>
<dbReference type="PDB" id="8TRT">
    <property type="method" value="X-ray"/>
    <property type="resolution" value="3.00 A"/>
    <property type="chains" value="D/E=199-326"/>
</dbReference>
<dbReference type="PDB" id="8TRV">
    <property type="method" value="X-ray"/>
    <property type="resolution" value="3.25 A"/>
    <property type="chains" value="A/B=23-326"/>
</dbReference>
<dbReference type="PDB" id="8TV1">
    <property type="method" value="X-ray"/>
    <property type="resolution" value="2.60 A"/>
    <property type="chains" value="C=23-326"/>
</dbReference>
<dbReference type="PDB" id="8TV5">
    <property type="method" value="X-ray"/>
    <property type="resolution" value="4.60 A"/>
    <property type="chains" value="C/F=23-326"/>
</dbReference>
<dbReference type="PDB" id="8XPV">
    <property type="method" value="X-ray"/>
    <property type="resolution" value="1.55 A"/>
    <property type="chains" value="A=596-900"/>
</dbReference>
<dbReference type="PDBsum" id="1MQB"/>
<dbReference type="PDBsum" id="2E8N"/>
<dbReference type="PDBsum" id="2K9Y"/>
<dbReference type="PDBsum" id="2KSO"/>
<dbReference type="PDBsum" id="2X10"/>
<dbReference type="PDBsum" id="2X11"/>
<dbReference type="PDBsum" id="3C8X"/>
<dbReference type="PDBsum" id="3CZU"/>
<dbReference type="PDBsum" id="3FL7"/>
<dbReference type="PDBsum" id="3HEI"/>
<dbReference type="PDBsum" id="3HPN"/>
<dbReference type="PDBsum" id="3KKA"/>
<dbReference type="PDBsum" id="3MBW"/>
<dbReference type="PDBsum" id="3MX0"/>
<dbReference type="PDBsum" id="3SKJ"/>
<dbReference type="PDBsum" id="4P2K"/>
<dbReference type="PDBsum" id="4PDO"/>
<dbReference type="PDBsum" id="4TRL"/>
<dbReference type="PDBsum" id="5EK7"/>
<dbReference type="PDBsum" id="5I9U"/>
<dbReference type="PDBsum" id="5I9V"/>
<dbReference type="PDBsum" id="5I9W"/>
<dbReference type="PDBsum" id="5I9X"/>
<dbReference type="PDBsum" id="5I9Y"/>
<dbReference type="PDBsum" id="5I9Z"/>
<dbReference type="PDBsum" id="5IA0"/>
<dbReference type="PDBsum" id="5IA1"/>
<dbReference type="PDBsum" id="5IA2"/>
<dbReference type="PDBsum" id="5IA3"/>
<dbReference type="PDBsum" id="5IA4"/>
<dbReference type="PDBsum" id="5IA5"/>
<dbReference type="PDBsum" id="5NJZ"/>
<dbReference type="PDBsum" id="5NK0"/>
<dbReference type="PDBsum" id="5NK1"/>
<dbReference type="PDBsum" id="5NK2"/>
<dbReference type="PDBsum" id="5NK3"/>
<dbReference type="PDBsum" id="5NK4"/>
<dbReference type="PDBsum" id="5NK5"/>
<dbReference type="PDBsum" id="5NK6"/>
<dbReference type="PDBsum" id="5NK7"/>
<dbReference type="PDBsum" id="5NK8"/>
<dbReference type="PDBsum" id="5NK9"/>
<dbReference type="PDBsum" id="5NKA"/>
<dbReference type="PDBsum" id="5NKB"/>
<dbReference type="PDBsum" id="5NKC"/>
<dbReference type="PDBsum" id="5NKD"/>
<dbReference type="PDBsum" id="5NKE"/>
<dbReference type="PDBsum" id="5NKF"/>
<dbReference type="PDBsum" id="5NKG"/>
<dbReference type="PDBsum" id="5NKH"/>
<dbReference type="PDBsum" id="5NKI"/>
<dbReference type="PDBsum" id="5NZ9"/>
<dbReference type="PDBsum" id="6B9L"/>
<dbReference type="PDBsum" id="6F7M"/>
<dbReference type="PDBsum" id="6F7N"/>
<dbReference type="PDBsum" id="6FNF"/>
<dbReference type="PDBsum" id="6FNG"/>
<dbReference type="PDBsum" id="6FNH"/>
<dbReference type="PDBsum" id="6HES"/>
<dbReference type="PDBsum" id="6HET"/>
<dbReference type="PDBsum" id="6HEU"/>
<dbReference type="PDBsum" id="6HEV"/>
<dbReference type="PDBsum" id="6HEW"/>
<dbReference type="PDBsum" id="6HEX"/>
<dbReference type="PDBsum" id="6HEY"/>
<dbReference type="PDBsum" id="6NJZ"/>
<dbReference type="PDBsum" id="6NK0"/>
<dbReference type="PDBsum" id="6NK1"/>
<dbReference type="PDBsum" id="6NK2"/>
<dbReference type="PDBsum" id="6NKP"/>
<dbReference type="PDBsum" id="6Q7B"/>
<dbReference type="PDBsum" id="6Q7C"/>
<dbReference type="PDBsum" id="6Q7D"/>
<dbReference type="PDBsum" id="6Q7E"/>
<dbReference type="PDBsum" id="6Q7F"/>
<dbReference type="PDBsum" id="6Q7G"/>
<dbReference type="PDBsum" id="6RW2"/>
<dbReference type="PDBsum" id="7B7N"/>
<dbReference type="PDBsum" id="7CZE"/>
<dbReference type="PDBsum" id="7CZF"/>
<dbReference type="PDBsum" id="7KJA"/>
<dbReference type="PDBsum" id="7KJB"/>
<dbReference type="PDBsum" id="7KJC"/>
<dbReference type="PDBsum" id="8BIN"/>
<dbReference type="PDBsum" id="8BIO"/>
<dbReference type="PDBsum" id="8BK0"/>
<dbReference type="PDBsum" id="8BM8"/>
<dbReference type="PDBsum" id="8BOC"/>
<dbReference type="PDBsum" id="8BOD"/>
<dbReference type="PDBsum" id="8BOF"/>
<dbReference type="PDBsum" id="8BOG"/>
<dbReference type="PDBsum" id="8BOH"/>
<dbReference type="PDBsum" id="8BOI"/>
<dbReference type="PDBsum" id="8BOK"/>
<dbReference type="PDBsum" id="8BOM"/>
<dbReference type="PDBsum" id="8QQY"/>
<dbReference type="PDBsum" id="8T9B"/>
<dbReference type="PDBsum" id="8TRS"/>
<dbReference type="PDBsum" id="8TRT"/>
<dbReference type="PDBsum" id="8TRV"/>
<dbReference type="PDBsum" id="8TV1"/>
<dbReference type="PDBsum" id="8TV5"/>
<dbReference type="PDBsum" id="8XPV"/>
<dbReference type="BMRB" id="P29317"/>
<dbReference type="SMR" id="P29317"/>
<dbReference type="BioGRID" id="108288">
    <property type="interactions" value="733"/>
</dbReference>
<dbReference type="CORUM" id="P29317"/>
<dbReference type="DIP" id="DIP-96N"/>
<dbReference type="FunCoup" id="P29317">
    <property type="interactions" value="946"/>
</dbReference>
<dbReference type="IntAct" id="P29317">
    <property type="interactions" value="190"/>
</dbReference>
<dbReference type="MINT" id="P29317"/>
<dbReference type="STRING" id="9606.ENSP00000351209"/>
<dbReference type="BindingDB" id="P29317"/>
<dbReference type="ChEMBL" id="CHEMBL2068"/>
<dbReference type="DrugBank" id="DB01254">
    <property type="generic name" value="Dasatinib"/>
</dbReference>
<dbReference type="DrugBank" id="DB12010">
    <property type="generic name" value="Fostamatinib"/>
</dbReference>
<dbReference type="DrugBank" id="DB04395">
    <property type="generic name" value="Phosphoaminophosphonic Acid-Adenylate Ester"/>
</dbReference>
<dbReference type="DrugBank" id="DB08896">
    <property type="generic name" value="Regorafenib"/>
</dbReference>
<dbReference type="DrugCentral" id="P29317"/>
<dbReference type="GuidetoPHARMACOLOGY" id="1822"/>
<dbReference type="GlyConnect" id="777">
    <property type="glycosylation" value="3 N-Linked glycans (1 site)"/>
</dbReference>
<dbReference type="GlyCosmos" id="P29317">
    <property type="glycosylation" value="2 sites, 4 glycans"/>
</dbReference>
<dbReference type="GlyGen" id="P29317">
    <property type="glycosylation" value="5 sites, 6 N-linked glycans (2 sites), 2 O-linked glycans (2 sites)"/>
</dbReference>
<dbReference type="iPTMnet" id="P29317"/>
<dbReference type="PhosphoSitePlus" id="P29317"/>
<dbReference type="SwissPalm" id="P29317"/>
<dbReference type="BioMuta" id="EPHA2"/>
<dbReference type="DMDM" id="229462861"/>
<dbReference type="CPTAC" id="CPTAC-1784"/>
<dbReference type="CPTAC" id="CPTAC-2783"/>
<dbReference type="CPTAC" id="CPTAC-3201"/>
<dbReference type="jPOST" id="P29317"/>
<dbReference type="MassIVE" id="P29317"/>
<dbReference type="PaxDb" id="9606-ENSP00000351209"/>
<dbReference type="PeptideAtlas" id="P29317"/>
<dbReference type="ProteomicsDB" id="54535">
    <molecule id="P29317-1"/>
</dbReference>
<dbReference type="Pumba" id="P29317"/>
<dbReference type="ABCD" id="P29317">
    <property type="antibodies" value="32 sequenced antibodies"/>
</dbReference>
<dbReference type="Antibodypedia" id="4183">
    <property type="antibodies" value="1408 antibodies from 47 providers"/>
</dbReference>
<dbReference type="DNASU" id="1969"/>
<dbReference type="Ensembl" id="ENST00000358432.8">
    <molecule id="P29317-1"/>
    <property type="protein sequence ID" value="ENSP00000351209.5"/>
    <property type="gene ID" value="ENSG00000142627.13"/>
</dbReference>
<dbReference type="GeneID" id="1969"/>
<dbReference type="KEGG" id="hsa:1969"/>
<dbReference type="MANE-Select" id="ENST00000358432.8">
    <property type="protein sequence ID" value="ENSP00000351209.5"/>
    <property type="RefSeq nucleotide sequence ID" value="NM_004431.5"/>
    <property type="RefSeq protein sequence ID" value="NP_004422.2"/>
</dbReference>
<dbReference type="UCSC" id="uc001aya.2">
    <molecule id="P29317-1"/>
    <property type="organism name" value="human"/>
</dbReference>
<dbReference type="AGR" id="HGNC:3386"/>
<dbReference type="CTD" id="1969"/>
<dbReference type="DisGeNET" id="1969"/>
<dbReference type="GeneCards" id="EPHA2"/>
<dbReference type="HGNC" id="HGNC:3386">
    <property type="gene designation" value="EPHA2"/>
</dbReference>
<dbReference type="HPA" id="ENSG00000142627">
    <property type="expression patterns" value="Tissue enhanced (esophagus)"/>
</dbReference>
<dbReference type="MalaCards" id="EPHA2"/>
<dbReference type="MIM" id="116600">
    <property type="type" value="phenotype"/>
</dbReference>
<dbReference type="MIM" id="176946">
    <property type="type" value="gene"/>
</dbReference>
<dbReference type="neXtProt" id="NX_P29317"/>
<dbReference type="OpenTargets" id="ENSG00000142627"/>
<dbReference type="Orphanet" id="98991">
    <property type="disease" value="Early-onset nuclear cataract"/>
</dbReference>
<dbReference type="Orphanet" id="98993">
    <property type="disease" value="Early-onset posterior polar cataract"/>
</dbReference>
<dbReference type="Orphanet" id="441447">
    <property type="disease" value="Early-onset posterior subcapsular cataract"/>
</dbReference>
<dbReference type="Orphanet" id="98994">
    <property type="disease" value="Total early-onset cataract"/>
</dbReference>
<dbReference type="PharmGKB" id="PA27818"/>
<dbReference type="VEuPathDB" id="HostDB:ENSG00000142627"/>
<dbReference type="eggNOG" id="KOG0196">
    <property type="taxonomic scope" value="Eukaryota"/>
</dbReference>
<dbReference type="GeneTree" id="ENSGT00940000160786"/>
<dbReference type="HOGENOM" id="CLU_000288_141_4_1"/>
<dbReference type="InParanoid" id="P29317"/>
<dbReference type="OMA" id="CLECPVH"/>
<dbReference type="OrthoDB" id="4062651at2759"/>
<dbReference type="PAN-GO" id="P29317">
    <property type="GO annotations" value="8 GO annotations based on evolutionary models"/>
</dbReference>
<dbReference type="PhylomeDB" id="P29317"/>
<dbReference type="TreeFam" id="TF315608"/>
<dbReference type="BRENDA" id="2.7.10.1">
    <property type="organism ID" value="2681"/>
</dbReference>
<dbReference type="PathwayCommons" id="P29317"/>
<dbReference type="Reactome" id="R-HSA-2682334">
    <property type="pathway name" value="EPH-Ephrin signaling"/>
</dbReference>
<dbReference type="Reactome" id="R-HSA-3928663">
    <property type="pathway name" value="EPHA-mediated growth cone collapse"/>
</dbReference>
<dbReference type="Reactome" id="R-HSA-3928665">
    <property type="pathway name" value="EPH-ephrin mediated repulsion of cells"/>
</dbReference>
<dbReference type="Reactome" id="R-HSA-9013149">
    <property type="pathway name" value="RAC1 GTPase cycle"/>
</dbReference>
<dbReference type="Reactome" id="R-HSA-9013404">
    <property type="pathway name" value="RAC2 GTPase cycle"/>
</dbReference>
<dbReference type="Reactome" id="R-HSA-9013408">
    <property type="pathway name" value="RHOG GTPase cycle"/>
</dbReference>
<dbReference type="Reactome" id="R-HSA-9013420">
    <property type="pathway name" value="RHOU GTPase cycle"/>
</dbReference>
<dbReference type="Reactome" id="R-HSA-9013423">
    <property type="pathway name" value="RAC3 GTPase cycle"/>
</dbReference>
<dbReference type="Reactome" id="R-HSA-9013424">
    <property type="pathway name" value="RHOV GTPase cycle"/>
</dbReference>
<dbReference type="Reactome" id="R-HSA-9696264">
    <property type="pathway name" value="RND3 GTPase cycle"/>
</dbReference>
<dbReference type="Reactome" id="R-HSA-9696270">
    <property type="pathway name" value="RND2 GTPase cycle"/>
</dbReference>
<dbReference type="Reactome" id="R-HSA-9696273">
    <property type="pathway name" value="RND1 GTPase cycle"/>
</dbReference>
<dbReference type="SignaLink" id="P29317"/>
<dbReference type="SIGNOR" id="P29317"/>
<dbReference type="BioGRID-ORCS" id="1969">
    <property type="hits" value="20 hits in 1214 CRISPR screens"/>
</dbReference>
<dbReference type="ChiTaRS" id="EPHA2">
    <property type="organism name" value="human"/>
</dbReference>
<dbReference type="EvolutionaryTrace" id="P29317"/>
<dbReference type="GeneWiki" id="EPH_receptor_A2"/>
<dbReference type="GenomeRNAi" id="1969"/>
<dbReference type="Pharos" id="P29317">
    <property type="development level" value="Tclin"/>
</dbReference>
<dbReference type="PRO" id="PR:P29317"/>
<dbReference type="Proteomes" id="UP000005640">
    <property type="component" value="Chromosome 1"/>
</dbReference>
<dbReference type="RNAct" id="P29317">
    <property type="molecule type" value="protein"/>
</dbReference>
<dbReference type="Bgee" id="ENSG00000142627">
    <property type="expression patterns" value="Expressed in lower esophagus mucosa and 143 other cell types or tissues"/>
</dbReference>
<dbReference type="ExpressionAtlas" id="P29317">
    <property type="expression patterns" value="baseline and differential"/>
</dbReference>
<dbReference type="GO" id="GO:0009986">
    <property type="term" value="C:cell surface"/>
    <property type="evidence" value="ECO:0000314"/>
    <property type="project" value="UniProtKB"/>
</dbReference>
<dbReference type="GO" id="GO:0005925">
    <property type="term" value="C:focal adhesion"/>
    <property type="evidence" value="ECO:0000314"/>
    <property type="project" value="UniProtKB"/>
</dbReference>
<dbReference type="GO" id="GO:0030027">
    <property type="term" value="C:lamellipodium"/>
    <property type="evidence" value="ECO:0000314"/>
    <property type="project" value="UniProtKB"/>
</dbReference>
<dbReference type="GO" id="GO:0031258">
    <property type="term" value="C:lamellipodium membrane"/>
    <property type="evidence" value="ECO:0007669"/>
    <property type="project" value="UniProtKB-SubCell"/>
</dbReference>
<dbReference type="GO" id="GO:0031256">
    <property type="term" value="C:leading edge membrane"/>
    <property type="evidence" value="ECO:0000314"/>
    <property type="project" value="UniProtKB"/>
</dbReference>
<dbReference type="GO" id="GO:0005886">
    <property type="term" value="C:plasma membrane"/>
    <property type="evidence" value="ECO:0000314"/>
    <property type="project" value="UniProtKB"/>
</dbReference>
<dbReference type="GO" id="GO:0043235">
    <property type="term" value="C:receptor complex"/>
    <property type="evidence" value="ECO:0000318"/>
    <property type="project" value="GO_Central"/>
</dbReference>
<dbReference type="GO" id="GO:0032587">
    <property type="term" value="C:ruffle membrane"/>
    <property type="evidence" value="ECO:0007669"/>
    <property type="project" value="UniProtKB-SubCell"/>
</dbReference>
<dbReference type="GO" id="GO:0070160">
    <property type="term" value="C:tight junction"/>
    <property type="evidence" value="ECO:0000314"/>
    <property type="project" value="ARUK-UCL"/>
</dbReference>
<dbReference type="GO" id="GO:0005524">
    <property type="term" value="F:ATP binding"/>
    <property type="evidence" value="ECO:0007669"/>
    <property type="project" value="UniProtKB-KW"/>
</dbReference>
<dbReference type="GO" id="GO:0045296">
    <property type="term" value="F:cadherin binding"/>
    <property type="evidence" value="ECO:0007005"/>
    <property type="project" value="BHF-UCL"/>
</dbReference>
<dbReference type="GO" id="GO:0005003">
    <property type="term" value="F:ephrin receptor activity"/>
    <property type="evidence" value="ECO:0007669"/>
    <property type="project" value="InterPro"/>
</dbReference>
<dbReference type="GO" id="GO:0019838">
    <property type="term" value="F:growth factor binding"/>
    <property type="evidence" value="ECO:0000353"/>
    <property type="project" value="ARUK-UCL"/>
</dbReference>
<dbReference type="GO" id="GO:0140677">
    <property type="term" value="F:molecular function activator activity"/>
    <property type="evidence" value="ECO:0000269"/>
    <property type="project" value="DisProt"/>
</dbReference>
<dbReference type="GO" id="GO:0004714">
    <property type="term" value="F:transmembrane receptor protein tyrosine kinase activity"/>
    <property type="evidence" value="ECO:0000314"/>
    <property type="project" value="UniProtKB"/>
</dbReference>
<dbReference type="GO" id="GO:0001618">
    <property type="term" value="F:virus receptor activity"/>
    <property type="evidence" value="ECO:0007669"/>
    <property type="project" value="UniProtKB-KW"/>
</dbReference>
<dbReference type="GO" id="GO:0090630">
    <property type="term" value="P:activation of GTPase activity"/>
    <property type="evidence" value="ECO:0000315"/>
    <property type="project" value="UniProtKB"/>
</dbReference>
<dbReference type="GO" id="GO:0001525">
    <property type="term" value="P:angiogenesis"/>
    <property type="evidence" value="ECO:0000318"/>
    <property type="project" value="GO_Central"/>
</dbReference>
<dbReference type="GO" id="GO:0048320">
    <property type="term" value="P:axial mesoderm formation"/>
    <property type="evidence" value="ECO:0007669"/>
    <property type="project" value="Ensembl"/>
</dbReference>
<dbReference type="GO" id="GO:0002043">
    <property type="term" value="P:blood vessel endothelial cell proliferation involved in sprouting angiogenesis"/>
    <property type="evidence" value="ECO:0007669"/>
    <property type="project" value="Ensembl"/>
</dbReference>
<dbReference type="GO" id="GO:0046849">
    <property type="term" value="P:bone remodeling"/>
    <property type="evidence" value="ECO:0000250"/>
    <property type="project" value="UniProtKB"/>
</dbReference>
<dbReference type="GO" id="GO:0060444">
    <property type="term" value="P:branching involved in mammary gland duct morphogenesis"/>
    <property type="evidence" value="ECO:0000250"/>
    <property type="project" value="UniProtKB"/>
</dbReference>
<dbReference type="GO" id="GO:0046058">
    <property type="term" value="P:cAMP metabolic process"/>
    <property type="evidence" value="ECO:0000315"/>
    <property type="project" value="UniProtKB"/>
</dbReference>
<dbReference type="GO" id="GO:0007155">
    <property type="term" value="P:cell adhesion"/>
    <property type="evidence" value="ECO:0007669"/>
    <property type="project" value="UniProtKB-KW"/>
</dbReference>
<dbReference type="GO" id="GO:0060326">
    <property type="term" value="P:cell chemotaxis"/>
    <property type="evidence" value="ECO:0000315"/>
    <property type="project" value="UniProtKB"/>
</dbReference>
<dbReference type="GO" id="GO:0016477">
    <property type="term" value="P:cell migration"/>
    <property type="evidence" value="ECO:0000315"/>
    <property type="project" value="UniProtKB"/>
</dbReference>
<dbReference type="GO" id="GO:0048870">
    <property type="term" value="P:cell motility"/>
    <property type="evidence" value="ECO:0000315"/>
    <property type="project" value="UniProtKB"/>
</dbReference>
<dbReference type="GO" id="GO:0007169">
    <property type="term" value="P:cell surface receptor protein tyrosine kinase signaling pathway"/>
    <property type="evidence" value="ECO:0000318"/>
    <property type="project" value="GO_Central"/>
</dbReference>
<dbReference type="GO" id="GO:0021953">
    <property type="term" value="P:central nervous system neuron differentiation"/>
    <property type="evidence" value="ECO:0007669"/>
    <property type="project" value="Ensembl"/>
</dbReference>
<dbReference type="GO" id="GO:0050830">
    <property type="term" value="P:defense response to Gram-positive bacterium"/>
    <property type="evidence" value="ECO:0007669"/>
    <property type="project" value="Ensembl"/>
</dbReference>
<dbReference type="GO" id="GO:0048013">
    <property type="term" value="P:ephrin receptor signaling pathway"/>
    <property type="evidence" value="ECO:0000314"/>
    <property type="project" value="UniProtKB"/>
</dbReference>
<dbReference type="GO" id="GO:0006954">
    <property type="term" value="P:inflammatory response"/>
    <property type="evidence" value="ECO:0007669"/>
    <property type="project" value="Ensembl"/>
</dbReference>
<dbReference type="GO" id="GO:0008630">
    <property type="term" value="P:intrinsic apoptotic signaling pathway in response to DNA damage"/>
    <property type="evidence" value="ECO:0000314"/>
    <property type="project" value="UniProtKB"/>
</dbReference>
<dbReference type="GO" id="GO:0030216">
    <property type="term" value="P:keratinocyte differentiation"/>
    <property type="evidence" value="ECO:0000315"/>
    <property type="project" value="UniProtKB"/>
</dbReference>
<dbReference type="GO" id="GO:0070309">
    <property type="term" value="P:lens fiber cell morphogenesis"/>
    <property type="evidence" value="ECO:0000250"/>
    <property type="project" value="UniProtKB"/>
</dbReference>
<dbReference type="GO" id="GO:0033598">
    <property type="term" value="P:mammary gland epithelial cell proliferation"/>
    <property type="evidence" value="ECO:0000250"/>
    <property type="project" value="UniProtKB"/>
</dbReference>
<dbReference type="GO" id="GO:0016525">
    <property type="term" value="P:negative regulation of angiogenesis"/>
    <property type="evidence" value="ECO:0007669"/>
    <property type="project" value="Ensembl"/>
</dbReference>
<dbReference type="GO" id="GO:0032682">
    <property type="term" value="P:negative regulation of chemokine production"/>
    <property type="evidence" value="ECO:0007669"/>
    <property type="project" value="Ensembl"/>
</dbReference>
<dbReference type="GO" id="GO:1901491">
    <property type="term" value="P:negative regulation of lymphangiogenesis"/>
    <property type="evidence" value="ECO:0007669"/>
    <property type="project" value="Ensembl"/>
</dbReference>
<dbReference type="GO" id="GO:0021915">
    <property type="term" value="P:neural tube development"/>
    <property type="evidence" value="ECO:0007669"/>
    <property type="project" value="Ensembl"/>
</dbReference>
<dbReference type="GO" id="GO:0060035">
    <property type="term" value="P:notochord cell development"/>
    <property type="evidence" value="ECO:0007669"/>
    <property type="project" value="Ensembl"/>
</dbReference>
<dbReference type="GO" id="GO:0014028">
    <property type="term" value="P:notochord formation"/>
    <property type="evidence" value="ECO:0007669"/>
    <property type="project" value="Ensembl"/>
</dbReference>
<dbReference type="GO" id="GO:0001649">
    <property type="term" value="P:osteoblast differentiation"/>
    <property type="evidence" value="ECO:0000250"/>
    <property type="project" value="UniProtKB"/>
</dbReference>
<dbReference type="GO" id="GO:0030316">
    <property type="term" value="P:osteoclast differentiation"/>
    <property type="evidence" value="ECO:0000250"/>
    <property type="project" value="UniProtKB"/>
</dbReference>
<dbReference type="GO" id="GO:1904238">
    <property type="term" value="P:pericyte cell differentiation"/>
    <property type="evidence" value="ECO:0007669"/>
    <property type="project" value="Ensembl"/>
</dbReference>
<dbReference type="GO" id="GO:1903348">
    <property type="term" value="P:positive regulation of bicellular tight junction assembly"/>
    <property type="evidence" value="ECO:0000315"/>
    <property type="project" value="ARUK-UCL"/>
</dbReference>
<dbReference type="GO" id="GO:0030335">
    <property type="term" value="P:positive regulation of cell migration"/>
    <property type="evidence" value="ECO:0000314"/>
    <property type="project" value="ARUK-UCL"/>
</dbReference>
<dbReference type="GO" id="GO:1903078">
    <property type="term" value="P:positive regulation of protein localization to plasma membrane"/>
    <property type="evidence" value="ECO:0000315"/>
    <property type="project" value="UniProtKB"/>
</dbReference>
<dbReference type="GO" id="GO:0036342">
    <property type="term" value="P:post-anal tail morphogenesis"/>
    <property type="evidence" value="ECO:0007669"/>
    <property type="project" value="Ensembl"/>
</dbReference>
<dbReference type="GO" id="GO:0072659">
    <property type="term" value="P:protein localization to plasma membrane"/>
    <property type="evidence" value="ECO:0000315"/>
    <property type="project" value="ARUK-UCL"/>
</dbReference>
<dbReference type="GO" id="GO:0045765">
    <property type="term" value="P:regulation of angiogenesis"/>
    <property type="evidence" value="ECO:0000250"/>
    <property type="project" value="UniProtKB"/>
</dbReference>
<dbReference type="GO" id="GO:0043535">
    <property type="term" value="P:regulation of blood vessel endothelial cell migration"/>
    <property type="evidence" value="ECO:0000250"/>
    <property type="project" value="UniProtKB"/>
</dbReference>
<dbReference type="GO" id="GO:0033628">
    <property type="term" value="P:regulation of cell adhesion mediated by integrin"/>
    <property type="evidence" value="ECO:0000314"/>
    <property type="project" value="UniProtKB"/>
</dbReference>
<dbReference type="GO" id="GO:0070372">
    <property type="term" value="P:regulation of ERK1 and ERK2 cascade"/>
    <property type="evidence" value="ECO:0000315"/>
    <property type="project" value="UniProtKB"/>
</dbReference>
<dbReference type="GO" id="GO:0010591">
    <property type="term" value="P:regulation of lamellipodium assembly"/>
    <property type="evidence" value="ECO:0000315"/>
    <property type="project" value="UniProtKB"/>
</dbReference>
<dbReference type="GO" id="GO:0070848">
    <property type="term" value="P:response to growth factor"/>
    <property type="evidence" value="ECO:0000315"/>
    <property type="project" value="UniProtKB"/>
</dbReference>
<dbReference type="GO" id="GO:0001501">
    <property type="term" value="P:skeletal system development"/>
    <property type="evidence" value="ECO:0007669"/>
    <property type="project" value="Ensembl"/>
</dbReference>
<dbReference type="GO" id="GO:0001570">
    <property type="term" value="P:vasculogenesis"/>
    <property type="evidence" value="ECO:0007669"/>
    <property type="project" value="Ensembl"/>
</dbReference>
<dbReference type="CDD" id="cd10480">
    <property type="entry name" value="EphR_LBD_A2"/>
    <property type="match status" value="1"/>
</dbReference>
<dbReference type="CDD" id="cd00063">
    <property type="entry name" value="FN3"/>
    <property type="match status" value="2"/>
</dbReference>
<dbReference type="CDD" id="cd05063">
    <property type="entry name" value="PTKc_EphR_A2"/>
    <property type="match status" value="1"/>
</dbReference>
<dbReference type="CDD" id="cd09543">
    <property type="entry name" value="SAM_EPH-A2"/>
    <property type="match status" value="1"/>
</dbReference>
<dbReference type="FunFam" id="1.10.150.50:FF:000029">
    <property type="entry name" value="Ephrin type-A receptor 1"/>
    <property type="match status" value="1"/>
</dbReference>
<dbReference type="FunFam" id="1.20.5.510:FF:000004">
    <property type="entry name" value="Ephrin type-A receptor 2"/>
    <property type="match status" value="1"/>
</dbReference>
<dbReference type="FunFam" id="2.60.120.260:FF:000023">
    <property type="entry name" value="Ephrin type-A receptor 2"/>
    <property type="match status" value="1"/>
</dbReference>
<dbReference type="FunFam" id="2.60.40.10:FF:000724">
    <property type="entry name" value="ephrin type-A receptor 2"/>
    <property type="match status" value="1"/>
</dbReference>
<dbReference type="FunFam" id="2.60.40.1770:FF:000002">
    <property type="entry name" value="ephrin type-A receptor 2"/>
    <property type="match status" value="1"/>
</dbReference>
<dbReference type="FunFam" id="1.10.510.10:FF:000019">
    <property type="entry name" value="Ephrin type-A receptor 5"/>
    <property type="match status" value="1"/>
</dbReference>
<dbReference type="FunFam" id="2.10.50.10:FF:000001">
    <property type="entry name" value="Ephrin type-A receptor 5"/>
    <property type="match status" value="1"/>
</dbReference>
<dbReference type="FunFam" id="3.30.200.20:FF:000001">
    <property type="entry name" value="Ephrin type-A receptor 5"/>
    <property type="match status" value="1"/>
</dbReference>
<dbReference type="FunFam" id="2.60.40.10:FF:000059">
    <property type="entry name" value="Ephrin type-A receptor 6"/>
    <property type="match status" value="1"/>
</dbReference>
<dbReference type="Gene3D" id="2.60.40.1770">
    <property type="entry name" value="ephrin a2 ectodomain"/>
    <property type="match status" value="1"/>
</dbReference>
<dbReference type="Gene3D" id="2.60.120.260">
    <property type="entry name" value="Galactose-binding domain-like"/>
    <property type="match status" value="1"/>
</dbReference>
<dbReference type="Gene3D" id="2.60.40.10">
    <property type="entry name" value="Immunoglobulins"/>
    <property type="match status" value="2"/>
</dbReference>
<dbReference type="Gene3D" id="3.30.200.20">
    <property type="entry name" value="Phosphorylase Kinase, domain 1"/>
    <property type="match status" value="1"/>
</dbReference>
<dbReference type="Gene3D" id="1.20.5.510">
    <property type="entry name" value="Single helix bin"/>
    <property type="match status" value="1"/>
</dbReference>
<dbReference type="Gene3D" id="1.10.150.50">
    <property type="entry name" value="Transcription Factor, Ets-1"/>
    <property type="match status" value="1"/>
</dbReference>
<dbReference type="Gene3D" id="1.10.510.10">
    <property type="entry name" value="Transferase(Phosphotransferase) domain 1"/>
    <property type="match status" value="1"/>
</dbReference>
<dbReference type="Gene3D" id="2.10.50.10">
    <property type="entry name" value="Tumor Necrosis Factor Receptor, subunit A, domain 2"/>
    <property type="match status" value="1"/>
</dbReference>
<dbReference type="InterPro" id="IPR027936">
    <property type="entry name" value="Eph_TM"/>
</dbReference>
<dbReference type="InterPro" id="IPR034263">
    <property type="entry name" value="EphA2_rcpt_lig-bd"/>
</dbReference>
<dbReference type="InterPro" id="IPR001090">
    <property type="entry name" value="Ephrin_rcpt_lig-bd_dom"/>
</dbReference>
<dbReference type="InterPro" id="IPR050449">
    <property type="entry name" value="Ephrin_rcpt_TKs"/>
</dbReference>
<dbReference type="InterPro" id="IPR003961">
    <property type="entry name" value="FN3_dom"/>
</dbReference>
<dbReference type="InterPro" id="IPR036116">
    <property type="entry name" value="FN3_sf"/>
</dbReference>
<dbReference type="InterPro" id="IPR008979">
    <property type="entry name" value="Galactose-bd-like_sf"/>
</dbReference>
<dbReference type="InterPro" id="IPR009030">
    <property type="entry name" value="Growth_fac_rcpt_cys_sf"/>
</dbReference>
<dbReference type="InterPro" id="IPR013783">
    <property type="entry name" value="Ig-like_fold"/>
</dbReference>
<dbReference type="InterPro" id="IPR011009">
    <property type="entry name" value="Kinase-like_dom_sf"/>
</dbReference>
<dbReference type="InterPro" id="IPR000719">
    <property type="entry name" value="Prot_kinase_dom"/>
</dbReference>
<dbReference type="InterPro" id="IPR017441">
    <property type="entry name" value="Protein_kinase_ATP_BS"/>
</dbReference>
<dbReference type="InterPro" id="IPR001660">
    <property type="entry name" value="SAM"/>
</dbReference>
<dbReference type="InterPro" id="IPR013761">
    <property type="entry name" value="SAM/pointed_sf"/>
</dbReference>
<dbReference type="InterPro" id="IPR001245">
    <property type="entry name" value="Ser-Thr/Tyr_kinase_cat_dom"/>
</dbReference>
<dbReference type="InterPro" id="IPR008266">
    <property type="entry name" value="Tyr_kinase_AS"/>
</dbReference>
<dbReference type="InterPro" id="IPR020635">
    <property type="entry name" value="Tyr_kinase_cat_dom"/>
</dbReference>
<dbReference type="InterPro" id="IPR016257">
    <property type="entry name" value="Tyr_kinase_ephrin_rcpt"/>
</dbReference>
<dbReference type="InterPro" id="IPR001426">
    <property type="entry name" value="Tyr_kinase_rcpt_V_CS"/>
</dbReference>
<dbReference type="PANTHER" id="PTHR46877">
    <property type="entry name" value="EPH RECEPTOR A5"/>
    <property type="match status" value="1"/>
</dbReference>
<dbReference type="PANTHER" id="PTHR46877:SF20">
    <property type="entry name" value="RECEPTOR PROTEIN-TYROSINE KINASE"/>
    <property type="match status" value="1"/>
</dbReference>
<dbReference type="Pfam" id="PF14575">
    <property type="entry name" value="EphA2_TM"/>
    <property type="match status" value="1"/>
</dbReference>
<dbReference type="Pfam" id="PF01404">
    <property type="entry name" value="Ephrin_lbd"/>
    <property type="match status" value="1"/>
</dbReference>
<dbReference type="Pfam" id="PF00041">
    <property type="entry name" value="fn3"/>
    <property type="match status" value="2"/>
</dbReference>
<dbReference type="Pfam" id="PF07714">
    <property type="entry name" value="PK_Tyr_Ser-Thr"/>
    <property type="match status" value="1"/>
</dbReference>
<dbReference type="Pfam" id="PF00536">
    <property type="entry name" value="SAM_1"/>
    <property type="match status" value="1"/>
</dbReference>
<dbReference type="PIRSF" id="PIRSF000666">
    <property type="entry name" value="TyrPK_ephrin_receptor"/>
    <property type="match status" value="1"/>
</dbReference>
<dbReference type="PRINTS" id="PR00109">
    <property type="entry name" value="TYRKINASE"/>
</dbReference>
<dbReference type="SMART" id="SM00615">
    <property type="entry name" value="EPH_lbd"/>
    <property type="match status" value="1"/>
</dbReference>
<dbReference type="SMART" id="SM01411">
    <property type="entry name" value="Ephrin_rec_like"/>
    <property type="match status" value="1"/>
</dbReference>
<dbReference type="SMART" id="SM00060">
    <property type="entry name" value="FN3"/>
    <property type="match status" value="2"/>
</dbReference>
<dbReference type="SMART" id="SM00454">
    <property type="entry name" value="SAM"/>
    <property type="match status" value="1"/>
</dbReference>
<dbReference type="SMART" id="SM00219">
    <property type="entry name" value="TyrKc"/>
    <property type="match status" value="1"/>
</dbReference>
<dbReference type="SUPFAM" id="SSF49265">
    <property type="entry name" value="Fibronectin type III"/>
    <property type="match status" value="1"/>
</dbReference>
<dbReference type="SUPFAM" id="SSF49785">
    <property type="entry name" value="Galactose-binding domain-like"/>
    <property type="match status" value="1"/>
</dbReference>
<dbReference type="SUPFAM" id="SSF57184">
    <property type="entry name" value="Growth factor receptor domain"/>
    <property type="match status" value="1"/>
</dbReference>
<dbReference type="SUPFAM" id="SSF56112">
    <property type="entry name" value="Protein kinase-like (PK-like)"/>
    <property type="match status" value="1"/>
</dbReference>
<dbReference type="SUPFAM" id="SSF47769">
    <property type="entry name" value="SAM/Pointed domain"/>
    <property type="match status" value="1"/>
</dbReference>
<dbReference type="PROSITE" id="PS51550">
    <property type="entry name" value="EPH_LBD"/>
    <property type="match status" value="1"/>
</dbReference>
<dbReference type="PROSITE" id="PS50853">
    <property type="entry name" value="FN3"/>
    <property type="match status" value="2"/>
</dbReference>
<dbReference type="PROSITE" id="PS00107">
    <property type="entry name" value="PROTEIN_KINASE_ATP"/>
    <property type="match status" value="1"/>
</dbReference>
<dbReference type="PROSITE" id="PS50011">
    <property type="entry name" value="PROTEIN_KINASE_DOM"/>
    <property type="match status" value="1"/>
</dbReference>
<dbReference type="PROSITE" id="PS00109">
    <property type="entry name" value="PROTEIN_KINASE_TYR"/>
    <property type="match status" value="1"/>
</dbReference>
<dbReference type="PROSITE" id="PS00790">
    <property type="entry name" value="RECEPTOR_TYR_KIN_V_1"/>
    <property type="match status" value="1"/>
</dbReference>
<dbReference type="PROSITE" id="PS00791">
    <property type="entry name" value="RECEPTOR_TYR_KIN_V_2"/>
    <property type="match status" value="1"/>
</dbReference>
<dbReference type="PROSITE" id="PS50105">
    <property type="entry name" value="SAM_DOMAIN"/>
    <property type="match status" value="1"/>
</dbReference>
<proteinExistence type="evidence at protein level"/>
<keyword id="KW-0002">3D-structure</keyword>
<keyword id="KW-0025">Alternative splicing</keyword>
<keyword id="KW-0037">Angiogenesis</keyword>
<keyword id="KW-0053">Apoptosis</keyword>
<keyword id="KW-0067">ATP-binding</keyword>
<keyword id="KW-0898">Cataract</keyword>
<keyword id="KW-0130">Cell adhesion</keyword>
<keyword id="KW-0965">Cell junction</keyword>
<keyword id="KW-1003">Cell membrane</keyword>
<keyword id="KW-0966">Cell projection</keyword>
<keyword id="KW-0221">Differentiation</keyword>
<keyword id="KW-0225">Disease variant</keyword>
<keyword id="KW-1015">Disulfide bond</keyword>
<keyword id="KW-0325">Glycoprotein</keyword>
<keyword id="KW-1183">Host cell receptor for virus entry</keyword>
<keyword id="KW-0945">Host-virus interaction</keyword>
<keyword id="KW-0418">Kinase</keyword>
<keyword id="KW-0472">Membrane</keyword>
<keyword id="KW-0547">Nucleotide-binding</keyword>
<keyword id="KW-0597">Phosphoprotein</keyword>
<keyword id="KW-1267">Proteomics identification</keyword>
<keyword id="KW-0675">Receptor</keyword>
<keyword id="KW-1185">Reference proteome</keyword>
<keyword id="KW-0677">Repeat</keyword>
<keyword id="KW-0732">Signal</keyword>
<keyword id="KW-0808">Transferase</keyword>
<keyword id="KW-0812">Transmembrane</keyword>
<keyword id="KW-1133">Transmembrane helix</keyword>
<keyword id="KW-0829">Tyrosine-protein kinase</keyword>
<keyword id="KW-0832">Ubl conjugation</keyword>
<gene>
    <name type="primary">EPHA2</name>
    <name type="synonym">ECK</name>
</gene>
<accession>P29317</accession>
<accession>B5A968</accession>
<accession>Q8N3Z2</accession>
<evidence type="ECO:0000250" key="1"/>
<evidence type="ECO:0000250" key="2">
    <source>
        <dbReference type="UniProtKB" id="Q03145"/>
    </source>
</evidence>
<evidence type="ECO:0000255" key="3"/>
<evidence type="ECO:0000255" key="4">
    <source>
        <dbReference type="PROSITE-ProRule" id="PRU00159"/>
    </source>
</evidence>
<evidence type="ECO:0000255" key="5">
    <source>
        <dbReference type="PROSITE-ProRule" id="PRU00184"/>
    </source>
</evidence>
<evidence type="ECO:0000255" key="6">
    <source>
        <dbReference type="PROSITE-ProRule" id="PRU00316"/>
    </source>
</evidence>
<evidence type="ECO:0000255" key="7">
    <source>
        <dbReference type="PROSITE-ProRule" id="PRU00883"/>
    </source>
</evidence>
<evidence type="ECO:0000255" key="8">
    <source>
        <dbReference type="PROSITE-ProRule" id="PRU10028"/>
    </source>
</evidence>
<evidence type="ECO:0000269" key="9">
    <source>
    </source>
</evidence>
<evidence type="ECO:0000269" key="10">
    <source>
    </source>
</evidence>
<evidence type="ECO:0000269" key="11">
    <source>
    </source>
</evidence>
<evidence type="ECO:0000269" key="12">
    <source>
    </source>
</evidence>
<evidence type="ECO:0000269" key="13">
    <source>
    </source>
</evidence>
<evidence type="ECO:0000269" key="14">
    <source>
    </source>
</evidence>
<evidence type="ECO:0000269" key="15">
    <source>
    </source>
</evidence>
<evidence type="ECO:0000269" key="16">
    <source>
    </source>
</evidence>
<evidence type="ECO:0000269" key="17">
    <source>
    </source>
</evidence>
<evidence type="ECO:0000269" key="18">
    <source>
    </source>
</evidence>
<evidence type="ECO:0000269" key="19">
    <source>
    </source>
</evidence>
<evidence type="ECO:0000269" key="20">
    <source>
    </source>
</evidence>
<evidence type="ECO:0000269" key="21">
    <source>
    </source>
</evidence>
<evidence type="ECO:0000269" key="22">
    <source>
    </source>
</evidence>
<evidence type="ECO:0000269" key="23">
    <source>
    </source>
</evidence>
<evidence type="ECO:0000269" key="24">
    <source>
    </source>
</evidence>
<evidence type="ECO:0000269" key="25">
    <source>
    </source>
</evidence>
<evidence type="ECO:0000269" key="26">
    <source>
    </source>
</evidence>
<evidence type="ECO:0000269" key="27">
    <source>
    </source>
</evidence>
<evidence type="ECO:0000269" key="28">
    <source>
    </source>
</evidence>
<evidence type="ECO:0000269" key="29">
    <source>
    </source>
</evidence>
<evidence type="ECO:0000269" key="30">
    <source>
    </source>
</evidence>
<evidence type="ECO:0000269" key="31">
    <source>
    </source>
</evidence>
<evidence type="ECO:0000269" key="32">
    <source>
    </source>
</evidence>
<evidence type="ECO:0000269" key="33">
    <source>
    </source>
</evidence>
<evidence type="ECO:0000269" key="34">
    <source>
    </source>
</evidence>
<evidence type="ECO:0000269" key="35">
    <source>
    </source>
</evidence>
<evidence type="ECO:0000269" key="36">
    <source>
    </source>
</evidence>
<evidence type="ECO:0000269" key="37">
    <source>
    </source>
</evidence>
<evidence type="ECO:0000269" key="38">
    <source>
    </source>
</evidence>
<evidence type="ECO:0000269" key="39">
    <source>
    </source>
</evidence>
<evidence type="ECO:0000303" key="40">
    <source>
    </source>
</evidence>
<evidence type="ECO:0000305" key="41"/>
<evidence type="ECO:0007744" key="42">
    <source>
    </source>
</evidence>
<evidence type="ECO:0007744" key="43">
    <source>
    </source>
</evidence>
<evidence type="ECO:0007744" key="44">
    <source>
    </source>
</evidence>
<evidence type="ECO:0007744" key="45">
    <source>
    </source>
</evidence>
<evidence type="ECO:0007829" key="46">
    <source>
        <dbReference type="PDB" id="2K9Y"/>
    </source>
</evidence>
<evidence type="ECO:0007829" key="47">
    <source>
        <dbReference type="PDB" id="3FL7"/>
    </source>
</evidence>
<evidence type="ECO:0007829" key="48">
    <source>
        <dbReference type="PDB" id="3HEI"/>
    </source>
</evidence>
<evidence type="ECO:0007829" key="49">
    <source>
        <dbReference type="PDB" id="3MBW"/>
    </source>
</evidence>
<evidence type="ECO:0007829" key="50">
    <source>
        <dbReference type="PDB" id="4PDO"/>
    </source>
</evidence>
<evidence type="ECO:0007829" key="51">
    <source>
        <dbReference type="PDB" id="5EK7"/>
    </source>
</evidence>
<evidence type="ECO:0007829" key="52">
    <source>
        <dbReference type="PDB" id="5NKF"/>
    </source>
</evidence>
<evidence type="ECO:0007829" key="53">
    <source>
        <dbReference type="PDB" id="5NKH"/>
    </source>
</evidence>
<evidence type="ECO:0007829" key="54">
    <source>
        <dbReference type="PDB" id="6NK0"/>
    </source>
</evidence>
<evidence type="ECO:0007829" key="55">
    <source>
        <dbReference type="PDB" id="6NK1"/>
    </source>
</evidence>
<evidence type="ECO:0007829" key="56">
    <source>
        <dbReference type="PDB" id="6Q7D"/>
    </source>
</evidence>
<evidence type="ECO:0007829" key="57">
    <source>
        <dbReference type="PDB" id="6Q7E"/>
    </source>
</evidence>
<evidence type="ECO:0007829" key="58">
    <source>
        <dbReference type="PDB" id="6RW2"/>
    </source>
</evidence>
<evidence type="ECO:0007829" key="59">
    <source>
        <dbReference type="PDB" id="7KJA"/>
    </source>
</evidence>
<evidence type="ECO:0007829" key="60">
    <source>
        <dbReference type="PDB" id="8QQY"/>
    </source>
</evidence>
<evidence type="ECO:0007829" key="61">
    <source>
        <dbReference type="PDB" id="8TRS"/>
    </source>
</evidence>
<evidence type="ECO:0007829" key="62">
    <source>
        <dbReference type="PDB" id="8TV1"/>
    </source>
</evidence>
<organism>
    <name type="scientific">Homo sapiens</name>
    <name type="common">Human</name>
    <dbReference type="NCBI Taxonomy" id="9606"/>
    <lineage>
        <taxon>Eukaryota</taxon>
        <taxon>Metazoa</taxon>
        <taxon>Chordata</taxon>
        <taxon>Craniata</taxon>
        <taxon>Vertebrata</taxon>
        <taxon>Euteleostomi</taxon>
        <taxon>Mammalia</taxon>
        <taxon>Eutheria</taxon>
        <taxon>Euarchontoglires</taxon>
        <taxon>Primates</taxon>
        <taxon>Haplorrhini</taxon>
        <taxon>Catarrhini</taxon>
        <taxon>Hominidae</taxon>
        <taxon>Homo</taxon>
    </lineage>
</organism>